<accession>P06493</accession>
<accession>A8K7C4</accession>
<accession>C9J497</accession>
<accession>O60764</accession>
<dbReference type="EC" id="2.7.11.22" evidence="27 28 29 35 41"/>
<dbReference type="EC" id="2.7.11.23" evidence="1"/>
<dbReference type="EMBL" id="X05360">
    <property type="protein sequence ID" value="CAA28963.1"/>
    <property type="molecule type" value="mRNA"/>
</dbReference>
<dbReference type="EMBL" id="Y00272">
    <property type="protein sequence ID" value="CAA68376.1"/>
    <property type="molecule type" value="mRNA"/>
</dbReference>
<dbReference type="EMBL" id="D88357">
    <property type="protein sequence ID" value="BAA26001.1"/>
    <property type="molecule type" value="mRNA"/>
</dbReference>
<dbReference type="EMBL" id="AK291939">
    <property type="protein sequence ID" value="BAF84628.1"/>
    <property type="molecule type" value="mRNA"/>
</dbReference>
<dbReference type="EMBL" id="BT007004">
    <property type="protein sequence ID" value="AAP35650.1"/>
    <property type="molecule type" value="mRNA"/>
</dbReference>
<dbReference type="EMBL" id="AF512554">
    <property type="protein sequence ID" value="AAM34793.1"/>
    <property type="molecule type" value="Genomic_DNA"/>
</dbReference>
<dbReference type="EMBL" id="AC022390">
    <property type="status" value="NOT_ANNOTATED_CDS"/>
    <property type="molecule type" value="Genomic_DNA"/>
</dbReference>
<dbReference type="EMBL" id="CH471083">
    <property type="protein sequence ID" value="EAW54204.1"/>
    <property type="status" value="ALT_SEQ"/>
    <property type="molecule type" value="Genomic_DNA"/>
</dbReference>
<dbReference type="EMBL" id="BC014563">
    <property type="protein sequence ID" value="AAH14563.1"/>
    <property type="molecule type" value="mRNA"/>
</dbReference>
<dbReference type="CCDS" id="CCDS44408.1">
    <molecule id="P06493-1"/>
</dbReference>
<dbReference type="CCDS" id="CCDS7260.1">
    <molecule id="P06493-2"/>
</dbReference>
<dbReference type="PIR" id="A29539">
    <property type="entry name" value="A29539"/>
</dbReference>
<dbReference type="RefSeq" id="NP_001307847.1">
    <molecule id="P06493-1"/>
    <property type="nucleotide sequence ID" value="NM_001320918.1"/>
</dbReference>
<dbReference type="RefSeq" id="NP_001777.1">
    <molecule id="P06493-1"/>
    <property type="nucleotide sequence ID" value="NM_001786.5"/>
</dbReference>
<dbReference type="RefSeq" id="NP_203698.1">
    <molecule id="P06493-2"/>
    <property type="nucleotide sequence ID" value="NM_033379.5"/>
</dbReference>
<dbReference type="RefSeq" id="XP_005270360.1">
    <molecule id="P06493-1"/>
    <property type="nucleotide sequence ID" value="XM_005270303.4"/>
</dbReference>
<dbReference type="RefSeq" id="XP_054223227.1">
    <molecule id="P06493-1"/>
    <property type="nucleotide sequence ID" value="XM_054367252.1"/>
</dbReference>
<dbReference type="PDB" id="4Y72">
    <property type="method" value="X-ray"/>
    <property type="resolution" value="2.30 A"/>
    <property type="chains" value="A=1-297"/>
</dbReference>
<dbReference type="PDB" id="4YC3">
    <property type="method" value="X-ray"/>
    <property type="resolution" value="2.70 A"/>
    <property type="chains" value="A=1-297"/>
</dbReference>
<dbReference type="PDB" id="4YC6">
    <property type="method" value="X-ray"/>
    <property type="resolution" value="2.60 A"/>
    <property type="chains" value="A/C/E/G=1-297"/>
</dbReference>
<dbReference type="PDB" id="5HQ0">
    <property type="method" value="X-ray"/>
    <property type="resolution" value="2.30 A"/>
    <property type="chains" value="A=1-297"/>
</dbReference>
<dbReference type="PDB" id="5LQF">
    <property type="method" value="X-ray"/>
    <property type="resolution" value="2.06 A"/>
    <property type="chains" value="A/D=1-297"/>
</dbReference>
<dbReference type="PDB" id="6GU2">
    <property type="method" value="X-ray"/>
    <property type="resolution" value="2.00 A"/>
    <property type="chains" value="A=1-297"/>
</dbReference>
<dbReference type="PDB" id="6GU3">
    <property type="method" value="X-ray"/>
    <property type="resolution" value="2.65 A"/>
    <property type="chains" value="A=1-297"/>
</dbReference>
<dbReference type="PDB" id="6GU4">
    <property type="method" value="X-ray"/>
    <property type="resolution" value="2.73 A"/>
    <property type="chains" value="A=1-297"/>
</dbReference>
<dbReference type="PDB" id="6GU6">
    <property type="method" value="X-ray"/>
    <property type="resolution" value="2.33 A"/>
    <property type="chains" value="A=1-297"/>
</dbReference>
<dbReference type="PDB" id="6GU7">
    <property type="method" value="X-ray"/>
    <property type="resolution" value="2.75 A"/>
    <property type="chains" value="A/C/E/G=1-297"/>
</dbReference>
<dbReference type="PDB" id="6TWN">
    <property type="method" value="X-ray"/>
    <property type="resolution" value="2.28 A"/>
    <property type="chains" value="C/D=207-223"/>
</dbReference>
<dbReference type="PDB" id="7NJ0">
    <property type="method" value="EM"/>
    <property type="resolution" value="3.60 A"/>
    <property type="chains" value="B=1-297"/>
</dbReference>
<dbReference type="PDBsum" id="4Y72"/>
<dbReference type="PDBsum" id="4YC3"/>
<dbReference type="PDBsum" id="4YC6"/>
<dbReference type="PDBsum" id="5HQ0"/>
<dbReference type="PDBsum" id="5LQF"/>
<dbReference type="PDBsum" id="6GU2"/>
<dbReference type="PDBsum" id="6GU3"/>
<dbReference type="PDBsum" id="6GU4"/>
<dbReference type="PDBsum" id="6GU6"/>
<dbReference type="PDBsum" id="6GU7"/>
<dbReference type="PDBsum" id="6TWN"/>
<dbReference type="PDBsum" id="7NJ0"/>
<dbReference type="EMDB" id="EMD-12368"/>
<dbReference type="SMR" id="P06493"/>
<dbReference type="BioGRID" id="107420">
    <property type="interactions" value="585"/>
</dbReference>
<dbReference type="ComplexPortal" id="CPX-2003">
    <property type="entry name" value="Cyclin A1-CDK1 complex"/>
</dbReference>
<dbReference type="ComplexPortal" id="CPX-2004">
    <property type="entry name" value="Cyclin A2-CDK1 complex"/>
</dbReference>
<dbReference type="ComplexPortal" id="CPX-2007">
    <property type="entry name" value="Cyclin B1-CDK1 complex"/>
</dbReference>
<dbReference type="ComplexPortal" id="CPX-2008">
    <property type="entry name" value="Cyclin B2-CDK1 complex"/>
</dbReference>
<dbReference type="CORUM" id="P06493"/>
<dbReference type="DIP" id="DIP-35N"/>
<dbReference type="ELM" id="P06493"/>
<dbReference type="FunCoup" id="P06493">
    <property type="interactions" value="2614"/>
</dbReference>
<dbReference type="IntAct" id="P06493">
    <property type="interactions" value="226"/>
</dbReference>
<dbReference type="MINT" id="P06493"/>
<dbReference type="STRING" id="9606.ENSP00000378699"/>
<dbReference type="BindingDB" id="P06493"/>
<dbReference type="ChEMBL" id="CHEMBL308"/>
<dbReference type="DrugBank" id="DB07149">
    <property type="generic name" value="(7S)-2-(2-aminopyrimidin-4-yl)-7-(2-fluoroethyl)-1,5,6,7-tetrahydro-4H-pyrrolo[3,2-c]pyridin-4-one"/>
</dbReference>
<dbReference type="DrugBank" id="DB13035">
    <property type="generic name" value="AG-24322"/>
</dbReference>
<dbReference type="DrugBank" id="DB04014">
    <property type="generic name" value="Alsterpaullone"/>
</dbReference>
<dbReference type="DrugBank" id="DB03496">
    <property type="generic name" value="Alvocidib"/>
</dbReference>
<dbReference type="DrugBank" id="DB08142">
    <property type="generic name" value="AT-7519"/>
</dbReference>
<dbReference type="DrugBank" id="DB16652">
    <property type="generic name" value="Avotaciclib"/>
</dbReference>
<dbReference type="DrugBank" id="DB03777">
    <property type="generic name" value="Bisindolylmaleimide I"/>
</dbReference>
<dbReference type="DrugBank" id="DB12021">
    <property type="generic name" value="Dinaciclib"/>
</dbReference>
<dbReference type="DrugBank" id="DB12010">
    <property type="generic name" value="Fostamatinib"/>
</dbReference>
<dbReference type="DrugBank" id="DB02950">
    <property type="generic name" value="Hymenialdisine"/>
</dbReference>
<dbReference type="DrugBank" id="DB02052">
    <property type="generic name" value="Indirubin-3'-monoxime"/>
</dbReference>
<dbReference type="DrugBank" id="DB07664">
    <property type="generic name" value="K-00546"/>
</dbReference>
<dbReference type="DrugBank" id="DB05608">
    <property type="generic name" value="MKC-1"/>
</dbReference>
<dbReference type="DrugBank" id="DB02116">
    <property type="generic name" value="Olomoucine"/>
</dbReference>
<dbReference type="DrugBank" id="DB12686">
    <property type="generic name" value="PHA-793887"/>
</dbReference>
<dbReference type="DrugBank" id="DB02733">
    <property type="generic name" value="Purvalanol"/>
</dbReference>
<dbReference type="DrugBank" id="DB04751">
    <property type="generic name" value="Purvalanol A"/>
</dbReference>
<dbReference type="DrugBank" id="DB08094">
    <property type="generic name" value="RO-4584820"/>
</dbReference>
<dbReference type="DrugBank" id="DB06195">
    <property type="generic name" value="Seliciclib"/>
</dbReference>
<dbReference type="DrugBank" id="DB03428">
    <property type="generic name" value="SU9516"/>
</dbReference>
<dbReference type="DrugCentral" id="P06493"/>
<dbReference type="GuidetoPHARMACOLOGY" id="1961"/>
<dbReference type="TCDB" id="1.I.1.1.3">
    <property type="family name" value="the nuclear pore complex (npc) family"/>
</dbReference>
<dbReference type="GlyGen" id="P06493">
    <property type="glycosylation" value="1 site, 1 O-linked glycan (1 site)"/>
</dbReference>
<dbReference type="iPTMnet" id="P06493"/>
<dbReference type="MetOSite" id="P06493"/>
<dbReference type="PhosphoSitePlus" id="P06493"/>
<dbReference type="SwissPalm" id="P06493"/>
<dbReference type="BioMuta" id="CDK1"/>
<dbReference type="DMDM" id="334302921"/>
<dbReference type="CPTAC" id="CPTAC-1040"/>
<dbReference type="CPTAC" id="CPTAC-1041"/>
<dbReference type="CPTAC" id="CPTAC-1042"/>
<dbReference type="CPTAC" id="CPTAC-1200"/>
<dbReference type="CPTAC" id="CPTAC-3054"/>
<dbReference type="CPTAC" id="CPTAC-5897"/>
<dbReference type="CPTAC" id="CPTAC-5898"/>
<dbReference type="CPTAC" id="CPTAC-797"/>
<dbReference type="CPTAC" id="CPTAC-798"/>
<dbReference type="CPTAC" id="CPTAC-801"/>
<dbReference type="jPOST" id="P06493"/>
<dbReference type="MassIVE" id="P06493"/>
<dbReference type="PaxDb" id="9606-ENSP00000378699"/>
<dbReference type="PeptideAtlas" id="P06493"/>
<dbReference type="ProteomicsDB" id="51905">
    <molecule id="P06493-1"/>
</dbReference>
<dbReference type="ProteomicsDB" id="51906">
    <molecule id="P06493-2"/>
</dbReference>
<dbReference type="Pumba" id="P06493"/>
<dbReference type="Antibodypedia" id="1134">
    <property type="antibodies" value="2696 antibodies from 49 providers"/>
</dbReference>
<dbReference type="CPTC" id="P06493">
    <property type="antibodies" value="1 antibody"/>
</dbReference>
<dbReference type="DNASU" id="983"/>
<dbReference type="Ensembl" id="ENST00000316629.8">
    <molecule id="P06493-2"/>
    <property type="protein sequence ID" value="ENSP00000325970.4"/>
    <property type="gene ID" value="ENSG00000170312.17"/>
</dbReference>
<dbReference type="Ensembl" id="ENST00000373809.2">
    <molecule id="P06493-2"/>
    <property type="protein sequence ID" value="ENSP00000362915.2"/>
    <property type="gene ID" value="ENSG00000170312.17"/>
</dbReference>
<dbReference type="Ensembl" id="ENST00000395284.8">
    <molecule id="P06493-1"/>
    <property type="protein sequence ID" value="ENSP00000378699.3"/>
    <property type="gene ID" value="ENSG00000170312.17"/>
</dbReference>
<dbReference type="GeneID" id="983"/>
<dbReference type="KEGG" id="hsa:983"/>
<dbReference type="MANE-Select" id="ENST00000395284.8">
    <property type="protein sequence ID" value="ENSP00000378699.3"/>
    <property type="RefSeq nucleotide sequence ID" value="NM_001786.5"/>
    <property type="RefSeq protein sequence ID" value="NP_001777.1"/>
</dbReference>
<dbReference type="UCSC" id="uc001jld.3">
    <molecule id="P06493-1"/>
    <property type="organism name" value="human"/>
</dbReference>
<dbReference type="AGR" id="HGNC:1722"/>
<dbReference type="CTD" id="983"/>
<dbReference type="DisGeNET" id="983"/>
<dbReference type="GeneCards" id="CDK1"/>
<dbReference type="HGNC" id="HGNC:1722">
    <property type="gene designation" value="CDK1"/>
</dbReference>
<dbReference type="HPA" id="ENSG00000170312">
    <property type="expression patterns" value="Tissue enhanced (bone marrow, lymphoid tissue)"/>
</dbReference>
<dbReference type="MIM" id="116940">
    <property type="type" value="gene"/>
</dbReference>
<dbReference type="neXtProt" id="NX_P06493"/>
<dbReference type="OpenTargets" id="ENSG00000170312"/>
<dbReference type="PharmGKB" id="PA99"/>
<dbReference type="VEuPathDB" id="HostDB:ENSG00000170312"/>
<dbReference type="eggNOG" id="KOG0594">
    <property type="taxonomic scope" value="Eukaryota"/>
</dbReference>
<dbReference type="GeneTree" id="ENSGT00940000153335"/>
<dbReference type="HOGENOM" id="CLU_000288_181_6_1"/>
<dbReference type="InParanoid" id="P06493"/>
<dbReference type="OMA" id="YLYQITR"/>
<dbReference type="OrthoDB" id="1732493at2759"/>
<dbReference type="PAN-GO" id="P06493">
    <property type="GO annotations" value="6 GO annotations based on evolutionary models"/>
</dbReference>
<dbReference type="PhylomeDB" id="P06493"/>
<dbReference type="TreeFam" id="TF101021"/>
<dbReference type="BRENDA" id="2.7.11.22">
    <property type="organism ID" value="2681"/>
</dbReference>
<dbReference type="PathwayCommons" id="P06493"/>
<dbReference type="Reactome" id="R-HSA-110056">
    <property type="pathway name" value="MAPK3 (ERK1) activation"/>
</dbReference>
<dbReference type="Reactome" id="R-HSA-113507">
    <property type="pathway name" value="E2F-enabled inhibition of pre-replication complex formation"/>
</dbReference>
<dbReference type="Reactome" id="R-HSA-1362300">
    <property type="pathway name" value="Transcription of E2F targets under negative control by p107 (RBL1) and p130 (RBL2) in complex with HDAC1"/>
</dbReference>
<dbReference type="Reactome" id="R-HSA-162658">
    <property type="pathway name" value="Golgi Cisternae Pericentriolar Stack Reorganization"/>
</dbReference>
<dbReference type="Reactome" id="R-HSA-170145">
    <property type="pathway name" value="Phosphorylation of proteins involved in the G2/M transition by Cyclin A:Cdc2 complexes"/>
</dbReference>
<dbReference type="Reactome" id="R-HSA-174048">
    <property type="pathway name" value="APC/C:Cdc20 mediated degradation of Cyclin B"/>
</dbReference>
<dbReference type="Reactome" id="R-HSA-174184">
    <property type="pathway name" value="Cdc20:Phospho-APC/C mediated degradation of Cyclin A"/>
</dbReference>
<dbReference type="Reactome" id="R-HSA-176408">
    <property type="pathway name" value="Regulation of APC/C activators between G1/S and early anaphase"/>
</dbReference>
<dbReference type="Reactome" id="R-HSA-176412">
    <property type="pathway name" value="Phosphorylation of the APC/C"/>
</dbReference>
<dbReference type="Reactome" id="R-HSA-176417">
    <property type="pathway name" value="Phosphorylation of Emi1"/>
</dbReference>
<dbReference type="Reactome" id="R-HSA-2299718">
    <property type="pathway name" value="Condensation of Prophase Chromosomes"/>
</dbReference>
<dbReference type="Reactome" id="R-HSA-2465910">
    <property type="pathway name" value="MASTL Facilitates Mitotic Progression"/>
</dbReference>
<dbReference type="Reactome" id="R-HSA-2500257">
    <property type="pathway name" value="Resolution of Sister Chromatid Cohesion"/>
</dbReference>
<dbReference type="Reactome" id="R-HSA-2514853">
    <property type="pathway name" value="Condensation of Prometaphase Chromosomes"/>
</dbReference>
<dbReference type="Reactome" id="R-HSA-2565942">
    <property type="pathway name" value="Regulation of PLK1 Activity at G2/M Transition"/>
</dbReference>
<dbReference type="Reactome" id="R-HSA-2980767">
    <property type="pathway name" value="Activation of NIMA Kinases NEK9, NEK6, NEK7"/>
</dbReference>
<dbReference type="Reactome" id="R-HSA-2995383">
    <property type="pathway name" value="Initiation of Nuclear Envelope (NE) Reformation"/>
</dbReference>
<dbReference type="Reactome" id="R-HSA-3301854">
    <property type="pathway name" value="Nuclear Pore Complex (NPC) Disassembly"/>
</dbReference>
<dbReference type="Reactome" id="R-HSA-380259">
    <property type="pathway name" value="Loss of Nlp from mitotic centrosomes"/>
</dbReference>
<dbReference type="Reactome" id="R-HSA-380270">
    <property type="pathway name" value="Recruitment of mitotic centrosome proteins and complexes"/>
</dbReference>
<dbReference type="Reactome" id="R-HSA-380284">
    <property type="pathway name" value="Loss of proteins required for interphase microtubule organization from the centrosome"/>
</dbReference>
<dbReference type="Reactome" id="R-HSA-380320">
    <property type="pathway name" value="Recruitment of NuMA to mitotic centrosomes"/>
</dbReference>
<dbReference type="Reactome" id="R-HSA-4419969">
    <property type="pathway name" value="Depolymerization of the Nuclear Lamina"/>
</dbReference>
<dbReference type="Reactome" id="R-HSA-5620912">
    <property type="pathway name" value="Anchoring of the basal body to the plasma membrane"/>
</dbReference>
<dbReference type="Reactome" id="R-HSA-5687128">
    <property type="pathway name" value="MAPK6/MAPK4 signaling"/>
</dbReference>
<dbReference type="Reactome" id="R-HSA-5689896">
    <property type="pathway name" value="Ovarian tumor domain proteases"/>
</dbReference>
<dbReference type="Reactome" id="R-HSA-6804114">
    <property type="pathway name" value="TP53 Regulates Transcription of Genes Involved in G2 Cell Cycle Arrest"/>
</dbReference>
<dbReference type="Reactome" id="R-HSA-6804757">
    <property type="pathway name" value="Regulation of TP53 Degradation"/>
</dbReference>
<dbReference type="Reactome" id="R-HSA-68875">
    <property type="pathway name" value="Mitotic Prophase"/>
</dbReference>
<dbReference type="Reactome" id="R-HSA-69205">
    <property type="pathway name" value="G1/S-Specific Transcription"/>
</dbReference>
<dbReference type="Reactome" id="R-HSA-69273">
    <property type="pathway name" value="Cyclin A/B1/B2 associated events during G2/M transition"/>
</dbReference>
<dbReference type="Reactome" id="R-HSA-69478">
    <property type="pathway name" value="G2/M DNA replication checkpoint"/>
</dbReference>
<dbReference type="Reactome" id="R-HSA-75035">
    <property type="pathway name" value="Chk1/Chk2(Cds1) mediated inactivation of Cyclin B:Cdk1 complex"/>
</dbReference>
<dbReference type="Reactome" id="R-HSA-8852276">
    <property type="pathway name" value="The role of GTSE1 in G2/M progression after G2 checkpoint"/>
</dbReference>
<dbReference type="Reactome" id="R-HSA-8854518">
    <property type="pathway name" value="AURKA Activation by TPX2"/>
</dbReference>
<dbReference type="Reactome" id="R-HSA-8878166">
    <property type="pathway name" value="Transcriptional regulation by RUNX2"/>
</dbReference>
<dbReference type="Reactome" id="R-HSA-9833482">
    <property type="pathway name" value="PKR-mediated signaling"/>
</dbReference>
<dbReference type="SignaLink" id="P06493"/>
<dbReference type="SIGNOR" id="P06493"/>
<dbReference type="BioGRID-ORCS" id="983">
    <property type="hits" value="864 hits in 1157 CRISPR screens"/>
</dbReference>
<dbReference type="CD-CODE" id="6A1B29D1">
    <property type="entry name" value="A-bodies"/>
</dbReference>
<dbReference type="CD-CODE" id="6F24707C">
    <property type="entry name" value="Cajal body"/>
</dbReference>
<dbReference type="CD-CODE" id="804901D1">
    <property type="entry name" value="Nuclear speckle"/>
</dbReference>
<dbReference type="CD-CODE" id="8C2F96ED">
    <property type="entry name" value="Centrosome"/>
</dbReference>
<dbReference type="CD-CODE" id="91857CE7">
    <property type="entry name" value="Nucleolus"/>
</dbReference>
<dbReference type="CD-CODE" id="DEE660B4">
    <property type="entry name" value="Stress granule"/>
</dbReference>
<dbReference type="ChiTaRS" id="CDK1">
    <property type="organism name" value="human"/>
</dbReference>
<dbReference type="EvolutionaryTrace" id="P06493"/>
<dbReference type="GeneWiki" id="Cdk1"/>
<dbReference type="GeneWiki" id="Cyclin-dependent_kinase_1"/>
<dbReference type="GenomeRNAi" id="983"/>
<dbReference type="Pharos" id="P06493">
    <property type="development level" value="Tchem"/>
</dbReference>
<dbReference type="PRO" id="PR:P06493"/>
<dbReference type="Proteomes" id="UP000005640">
    <property type="component" value="Chromosome 10"/>
</dbReference>
<dbReference type="RNAct" id="P06493">
    <property type="molecule type" value="protein"/>
</dbReference>
<dbReference type="Bgee" id="ENSG00000170312">
    <property type="expression patterns" value="Expressed in ventricular zone and 151 other cell types or tissues"/>
</dbReference>
<dbReference type="ExpressionAtlas" id="P06493">
    <property type="expression patterns" value="baseline and differential"/>
</dbReference>
<dbReference type="GO" id="GO:0005813">
    <property type="term" value="C:centrosome"/>
    <property type="evidence" value="ECO:0000314"/>
    <property type="project" value="UniProtKB"/>
</dbReference>
<dbReference type="GO" id="GO:0000781">
    <property type="term" value="C:chromosome, telomeric region"/>
    <property type="evidence" value="ECO:0007005"/>
    <property type="project" value="BHF-UCL"/>
</dbReference>
<dbReference type="GO" id="GO:0097121">
    <property type="term" value="C:cyclin A1-CDK1 complex"/>
    <property type="evidence" value="ECO:0000303"/>
    <property type="project" value="ComplexPortal"/>
</dbReference>
<dbReference type="GO" id="GO:0097122">
    <property type="term" value="C:cyclin A2-CDK1 complex"/>
    <property type="evidence" value="ECO:0000303"/>
    <property type="project" value="ComplexPortal"/>
</dbReference>
<dbReference type="GO" id="GO:0097125">
    <property type="term" value="C:cyclin B1-CDK1 complex"/>
    <property type="evidence" value="ECO:0000315"/>
    <property type="project" value="CAFA"/>
</dbReference>
<dbReference type="GO" id="GO:0000307">
    <property type="term" value="C:cyclin-dependent protein kinase holoenzyme complex"/>
    <property type="evidence" value="ECO:0000314"/>
    <property type="project" value="UniProtKB"/>
</dbReference>
<dbReference type="GO" id="GO:0005737">
    <property type="term" value="C:cytoplasm"/>
    <property type="evidence" value="ECO:0000314"/>
    <property type="project" value="CACAO"/>
</dbReference>
<dbReference type="GO" id="GO:0005829">
    <property type="term" value="C:cytosol"/>
    <property type="evidence" value="ECO:0000304"/>
    <property type="project" value="Reactome"/>
</dbReference>
<dbReference type="GO" id="GO:0005789">
    <property type="term" value="C:endoplasmic reticulum membrane"/>
    <property type="evidence" value="ECO:0000304"/>
    <property type="project" value="Reactome"/>
</dbReference>
<dbReference type="GO" id="GO:0070062">
    <property type="term" value="C:extracellular exosome"/>
    <property type="evidence" value="ECO:0007005"/>
    <property type="project" value="UniProtKB"/>
</dbReference>
<dbReference type="GO" id="GO:0016020">
    <property type="term" value="C:membrane"/>
    <property type="evidence" value="ECO:0007005"/>
    <property type="project" value="UniProtKB"/>
</dbReference>
<dbReference type="GO" id="GO:0030496">
    <property type="term" value="C:midbody"/>
    <property type="evidence" value="ECO:0000314"/>
    <property type="project" value="UniProtKB"/>
</dbReference>
<dbReference type="GO" id="GO:0005759">
    <property type="term" value="C:mitochondrial matrix"/>
    <property type="evidence" value="ECO:0007669"/>
    <property type="project" value="Ensembl"/>
</dbReference>
<dbReference type="GO" id="GO:0005739">
    <property type="term" value="C:mitochondrion"/>
    <property type="evidence" value="ECO:0000304"/>
    <property type="project" value="UniProtKB"/>
</dbReference>
<dbReference type="GO" id="GO:0072686">
    <property type="term" value="C:mitotic spindle"/>
    <property type="evidence" value="ECO:0000314"/>
    <property type="project" value="UniProtKB"/>
</dbReference>
<dbReference type="GO" id="GO:0005654">
    <property type="term" value="C:nucleoplasm"/>
    <property type="evidence" value="ECO:0000304"/>
    <property type="project" value="Reactome"/>
</dbReference>
<dbReference type="GO" id="GO:0005634">
    <property type="term" value="C:nucleus"/>
    <property type="evidence" value="ECO:0000314"/>
    <property type="project" value="CACAO"/>
</dbReference>
<dbReference type="GO" id="GO:0005876">
    <property type="term" value="C:spindle microtubule"/>
    <property type="evidence" value="ECO:0000314"/>
    <property type="project" value="UniProtKB"/>
</dbReference>
<dbReference type="GO" id="GO:0005524">
    <property type="term" value="F:ATP binding"/>
    <property type="evidence" value="ECO:0007669"/>
    <property type="project" value="UniProtKB-KW"/>
</dbReference>
<dbReference type="GO" id="GO:0003682">
    <property type="term" value="F:chromatin binding"/>
    <property type="evidence" value="ECO:0007669"/>
    <property type="project" value="Ensembl"/>
</dbReference>
<dbReference type="GO" id="GO:0030332">
    <property type="term" value="F:cyclin binding"/>
    <property type="evidence" value="ECO:0000314"/>
    <property type="project" value="MGI"/>
</dbReference>
<dbReference type="GO" id="GO:0097472">
    <property type="term" value="F:cyclin-dependent protein kinase activity"/>
    <property type="evidence" value="ECO:0000314"/>
    <property type="project" value="UniProtKB"/>
</dbReference>
<dbReference type="GO" id="GO:0004693">
    <property type="term" value="F:cyclin-dependent protein serine/threonine kinase activity"/>
    <property type="evidence" value="ECO:0000314"/>
    <property type="project" value="UniProtKB"/>
</dbReference>
<dbReference type="GO" id="GO:0035173">
    <property type="term" value="F:histone kinase activity"/>
    <property type="evidence" value="ECO:0000314"/>
    <property type="project" value="UniProtKB"/>
</dbReference>
<dbReference type="GO" id="GO:0030544">
    <property type="term" value="F:Hsp70 protein binding"/>
    <property type="evidence" value="ECO:0007669"/>
    <property type="project" value="Ensembl"/>
</dbReference>
<dbReference type="GO" id="GO:0016301">
    <property type="term" value="F:kinase activity"/>
    <property type="evidence" value="ECO:0000314"/>
    <property type="project" value="UniProt"/>
</dbReference>
<dbReference type="GO" id="GO:0004672">
    <property type="term" value="F:protein kinase activity"/>
    <property type="evidence" value="ECO:0000314"/>
    <property type="project" value="UniProtKB"/>
</dbReference>
<dbReference type="GO" id="GO:0106310">
    <property type="term" value="F:protein serine kinase activity"/>
    <property type="evidence" value="ECO:0007669"/>
    <property type="project" value="RHEA"/>
</dbReference>
<dbReference type="GO" id="GO:0004674">
    <property type="term" value="F:protein serine/threonine kinase activity"/>
    <property type="evidence" value="ECO:0000314"/>
    <property type="project" value="UniProtKB"/>
</dbReference>
<dbReference type="GO" id="GO:0008353">
    <property type="term" value="F:RNA polymerase II CTD heptapeptide repeat kinase activity"/>
    <property type="evidence" value="ECO:0000314"/>
    <property type="project" value="UniProtKB"/>
</dbReference>
<dbReference type="GO" id="GO:0001618">
    <property type="term" value="F:virus receptor activity"/>
    <property type="evidence" value="ECO:0007669"/>
    <property type="project" value="UniProtKB-KW"/>
</dbReference>
<dbReference type="GO" id="GO:0006915">
    <property type="term" value="P:apoptotic process"/>
    <property type="evidence" value="ECO:0007669"/>
    <property type="project" value="UniProtKB-KW"/>
</dbReference>
<dbReference type="GO" id="GO:0051301">
    <property type="term" value="P:cell division"/>
    <property type="evidence" value="ECO:0007669"/>
    <property type="project" value="UniProtKB-KW"/>
</dbReference>
<dbReference type="GO" id="GO:0016477">
    <property type="term" value="P:cell migration"/>
    <property type="evidence" value="ECO:0000304"/>
    <property type="project" value="UniProtKB"/>
</dbReference>
<dbReference type="GO" id="GO:0070301">
    <property type="term" value="P:cellular response to hydrogen peroxide"/>
    <property type="evidence" value="ECO:0007669"/>
    <property type="project" value="Ensembl"/>
</dbReference>
<dbReference type="GO" id="GO:0007098">
    <property type="term" value="P:centrosome cycle"/>
    <property type="evidence" value="ECO:0000304"/>
    <property type="project" value="UniProtKB"/>
</dbReference>
<dbReference type="GO" id="GO:0030261">
    <property type="term" value="P:chromosome condensation"/>
    <property type="evidence" value="ECO:0007669"/>
    <property type="project" value="Ensembl"/>
</dbReference>
<dbReference type="GO" id="GO:0006974">
    <property type="term" value="P:DNA damage response"/>
    <property type="evidence" value="ECO:0000314"/>
    <property type="project" value="UniProt"/>
</dbReference>
<dbReference type="GO" id="GO:0006281">
    <property type="term" value="P:DNA repair"/>
    <property type="evidence" value="ECO:0000304"/>
    <property type="project" value="UniProtKB"/>
</dbReference>
<dbReference type="GO" id="GO:0006260">
    <property type="term" value="P:DNA replication"/>
    <property type="evidence" value="ECO:0000304"/>
    <property type="project" value="UniProtKB"/>
</dbReference>
<dbReference type="GO" id="GO:0030855">
    <property type="term" value="P:epithelial cell differentiation"/>
    <property type="evidence" value="ECO:0000270"/>
    <property type="project" value="UniProtKB"/>
</dbReference>
<dbReference type="GO" id="GO:0070371">
    <property type="term" value="P:ERK1 and ERK2 cascade"/>
    <property type="evidence" value="ECO:0000304"/>
    <property type="project" value="Reactome"/>
</dbReference>
<dbReference type="GO" id="GO:0048144">
    <property type="term" value="P:fibroblast proliferation"/>
    <property type="evidence" value="ECO:0007669"/>
    <property type="project" value="Ensembl"/>
</dbReference>
<dbReference type="GO" id="GO:0000082">
    <property type="term" value="P:G1/S transition of mitotic cell cycle"/>
    <property type="evidence" value="ECO:0000314"/>
    <property type="project" value="BHF-UCL"/>
</dbReference>
<dbReference type="GO" id="GO:0000086">
    <property type="term" value="P:G2/M transition of mitotic cell cycle"/>
    <property type="evidence" value="ECO:0000314"/>
    <property type="project" value="UniProtKB"/>
</dbReference>
<dbReference type="GO" id="GO:0090166">
    <property type="term" value="P:Golgi disassembly"/>
    <property type="evidence" value="ECO:0000250"/>
    <property type="project" value="UniProtKB"/>
</dbReference>
<dbReference type="GO" id="GO:0000226">
    <property type="term" value="P:microtubule cytoskeleton organization"/>
    <property type="evidence" value="ECO:0000304"/>
    <property type="project" value="UniProtKB"/>
</dbReference>
<dbReference type="GO" id="GO:1902850">
    <property type="term" value="P:microtubule cytoskeleton organization involved in mitosis"/>
    <property type="evidence" value="ECO:0000314"/>
    <property type="project" value="UniProt"/>
</dbReference>
<dbReference type="GO" id="GO:0007095">
    <property type="term" value="P:mitotic G2 DNA damage checkpoint signaling"/>
    <property type="evidence" value="ECO:0000318"/>
    <property type="project" value="GO_Central"/>
</dbReference>
<dbReference type="GO" id="GO:0007077">
    <property type="term" value="P:mitotic nuclear membrane disassembly"/>
    <property type="evidence" value="ECO:0000314"/>
    <property type="project" value="UniProt"/>
</dbReference>
<dbReference type="GO" id="GO:0043066">
    <property type="term" value="P:negative regulation of apoptotic process"/>
    <property type="evidence" value="ECO:0000314"/>
    <property type="project" value="UniProtKB"/>
</dbReference>
<dbReference type="GO" id="GO:0010629">
    <property type="term" value="P:negative regulation of gene expression"/>
    <property type="evidence" value="ECO:0007669"/>
    <property type="project" value="Ensembl"/>
</dbReference>
<dbReference type="GO" id="GO:0018105">
    <property type="term" value="P:peptidyl-serine phosphorylation"/>
    <property type="evidence" value="ECO:0000314"/>
    <property type="project" value="ParkinsonsUK-UCL"/>
</dbReference>
<dbReference type="GO" id="GO:0018107">
    <property type="term" value="P:peptidyl-threonine phosphorylation"/>
    <property type="evidence" value="ECO:0000314"/>
    <property type="project" value="ParkinsonsUK-UCL"/>
</dbReference>
<dbReference type="GO" id="GO:0060045">
    <property type="term" value="P:positive regulation of cardiac muscle cell proliferation"/>
    <property type="evidence" value="ECO:0007669"/>
    <property type="project" value="Ensembl"/>
</dbReference>
<dbReference type="GO" id="GO:0045740">
    <property type="term" value="P:positive regulation of DNA replication"/>
    <property type="evidence" value="ECO:0007669"/>
    <property type="project" value="Ensembl"/>
</dbReference>
<dbReference type="GO" id="GO:0010971">
    <property type="term" value="P:positive regulation of G2/M transition of mitotic cell cycle"/>
    <property type="evidence" value="ECO:0000315"/>
    <property type="project" value="CAFA"/>
</dbReference>
<dbReference type="GO" id="GO:0010628">
    <property type="term" value="P:positive regulation of gene expression"/>
    <property type="evidence" value="ECO:0007669"/>
    <property type="project" value="Ensembl"/>
</dbReference>
<dbReference type="GO" id="GO:1905448">
    <property type="term" value="P:positive regulation of mitochondrial ATP synthesis coupled electron transport"/>
    <property type="evidence" value="ECO:0000315"/>
    <property type="project" value="CAFA"/>
</dbReference>
<dbReference type="GO" id="GO:0062033">
    <property type="term" value="P:positive regulation of mitotic sister chromatid segregation"/>
    <property type="evidence" value="ECO:0000314"/>
    <property type="project" value="UniProt"/>
</dbReference>
<dbReference type="GO" id="GO:0042307">
    <property type="term" value="P:positive regulation of protein import into nucleus"/>
    <property type="evidence" value="ECO:0007669"/>
    <property type="project" value="Ensembl"/>
</dbReference>
<dbReference type="GO" id="GO:1900182">
    <property type="term" value="P:positive regulation of protein localization to nucleus"/>
    <property type="evidence" value="ECO:0000315"/>
    <property type="project" value="UniProtKB"/>
</dbReference>
<dbReference type="GO" id="GO:0007344">
    <property type="term" value="P:pronuclear fusion"/>
    <property type="evidence" value="ECO:0000304"/>
    <property type="project" value="UniProtKB"/>
</dbReference>
<dbReference type="GO" id="GO:0016579">
    <property type="term" value="P:protein deubiquitination"/>
    <property type="evidence" value="ECO:0000304"/>
    <property type="project" value="Reactome"/>
</dbReference>
<dbReference type="GO" id="GO:0034501">
    <property type="term" value="P:protein localization to kinetochore"/>
    <property type="evidence" value="ECO:0000314"/>
    <property type="project" value="BHF-UCL"/>
</dbReference>
<dbReference type="GO" id="GO:0065003">
    <property type="term" value="P:protein-containing complex assembly"/>
    <property type="evidence" value="ECO:0007669"/>
    <property type="project" value="Ensembl"/>
</dbReference>
<dbReference type="GO" id="GO:1902423">
    <property type="term" value="P:regulation of attachment of mitotic spindle microtubules to kinetochore"/>
    <property type="evidence" value="ECO:0000314"/>
    <property type="project" value="UniProtKB"/>
</dbReference>
<dbReference type="GO" id="GO:0042752">
    <property type="term" value="P:regulation of circadian rhythm"/>
    <property type="evidence" value="ECO:0000315"/>
    <property type="project" value="UniProtKB"/>
</dbReference>
<dbReference type="GO" id="GO:0045995">
    <property type="term" value="P:regulation of embryonic development"/>
    <property type="evidence" value="ECO:0000304"/>
    <property type="project" value="UniProtKB"/>
</dbReference>
<dbReference type="GO" id="GO:0014038">
    <property type="term" value="P:regulation of Schwann cell differentiation"/>
    <property type="evidence" value="ECO:0000304"/>
    <property type="project" value="UniProtKB"/>
</dbReference>
<dbReference type="GO" id="GO:0014823">
    <property type="term" value="P:response to activity"/>
    <property type="evidence" value="ECO:0007669"/>
    <property type="project" value="Ensembl"/>
</dbReference>
<dbReference type="GO" id="GO:0014075">
    <property type="term" value="P:response to amine"/>
    <property type="evidence" value="ECO:0007669"/>
    <property type="project" value="Ensembl"/>
</dbReference>
<dbReference type="GO" id="GO:0048678">
    <property type="term" value="P:response to axon injury"/>
    <property type="evidence" value="ECO:0007669"/>
    <property type="project" value="Ensembl"/>
</dbReference>
<dbReference type="GO" id="GO:0046686">
    <property type="term" value="P:response to cadmium ion"/>
    <property type="evidence" value="ECO:0007669"/>
    <property type="project" value="Ensembl"/>
</dbReference>
<dbReference type="GO" id="GO:0046688">
    <property type="term" value="P:response to copper ion"/>
    <property type="evidence" value="ECO:0007669"/>
    <property type="project" value="Ensembl"/>
</dbReference>
<dbReference type="GO" id="GO:0045471">
    <property type="term" value="P:response to ethanol"/>
    <property type="evidence" value="ECO:0007669"/>
    <property type="project" value="Ensembl"/>
</dbReference>
<dbReference type="GO" id="GO:0009636">
    <property type="term" value="P:response to toxic substance"/>
    <property type="evidence" value="ECO:0007669"/>
    <property type="project" value="Ensembl"/>
</dbReference>
<dbReference type="GO" id="GO:0009410">
    <property type="term" value="P:response to xenobiotic stimulus"/>
    <property type="evidence" value="ECO:0007669"/>
    <property type="project" value="Ensembl"/>
</dbReference>
<dbReference type="GO" id="GO:0048511">
    <property type="term" value="P:rhythmic process"/>
    <property type="evidence" value="ECO:0007669"/>
    <property type="project" value="UniProtKB-KW"/>
</dbReference>
<dbReference type="GO" id="GO:0055015">
    <property type="term" value="P:ventricular cardiac muscle cell development"/>
    <property type="evidence" value="ECO:0007669"/>
    <property type="project" value="Ensembl"/>
</dbReference>
<dbReference type="CDD" id="cd07861">
    <property type="entry name" value="STKc_CDK1_euk"/>
    <property type="match status" value="1"/>
</dbReference>
<dbReference type="FunFam" id="1.10.510.10:FF:000231">
    <property type="entry name" value="Cyclin-dependent kinase 1"/>
    <property type="match status" value="1"/>
</dbReference>
<dbReference type="FunFam" id="3.30.200.20:FF:000027">
    <property type="entry name" value="Putative Cyclin-dependent kinase 1"/>
    <property type="match status" value="1"/>
</dbReference>
<dbReference type="Gene3D" id="3.30.200.20">
    <property type="entry name" value="Phosphorylase Kinase, domain 1"/>
    <property type="match status" value="1"/>
</dbReference>
<dbReference type="Gene3D" id="1.10.510.10">
    <property type="entry name" value="Transferase(Phosphotransferase) domain 1"/>
    <property type="match status" value="1"/>
</dbReference>
<dbReference type="InterPro" id="IPR050108">
    <property type="entry name" value="CDK"/>
</dbReference>
<dbReference type="InterPro" id="IPR011009">
    <property type="entry name" value="Kinase-like_dom_sf"/>
</dbReference>
<dbReference type="InterPro" id="IPR000719">
    <property type="entry name" value="Prot_kinase_dom"/>
</dbReference>
<dbReference type="InterPro" id="IPR017441">
    <property type="entry name" value="Protein_kinase_ATP_BS"/>
</dbReference>
<dbReference type="InterPro" id="IPR008271">
    <property type="entry name" value="Ser/Thr_kinase_AS"/>
</dbReference>
<dbReference type="PANTHER" id="PTHR24056">
    <property type="entry name" value="CELL DIVISION PROTEIN KINASE"/>
    <property type="match status" value="1"/>
</dbReference>
<dbReference type="PANTHER" id="PTHR24056:SF334">
    <property type="entry name" value="CYCLIN-DEPENDENT KINASE 1"/>
    <property type="match status" value="1"/>
</dbReference>
<dbReference type="Pfam" id="PF00069">
    <property type="entry name" value="Pkinase"/>
    <property type="match status" value="1"/>
</dbReference>
<dbReference type="SMART" id="SM00220">
    <property type="entry name" value="S_TKc"/>
    <property type="match status" value="1"/>
</dbReference>
<dbReference type="SUPFAM" id="SSF56112">
    <property type="entry name" value="Protein kinase-like (PK-like)"/>
    <property type="match status" value="1"/>
</dbReference>
<dbReference type="PROSITE" id="PS00107">
    <property type="entry name" value="PROTEIN_KINASE_ATP"/>
    <property type="match status" value="1"/>
</dbReference>
<dbReference type="PROSITE" id="PS50011">
    <property type="entry name" value="PROTEIN_KINASE_DOM"/>
    <property type="match status" value="1"/>
</dbReference>
<dbReference type="PROSITE" id="PS00108">
    <property type="entry name" value="PROTEIN_KINASE_ST"/>
    <property type="match status" value="1"/>
</dbReference>
<gene>
    <name type="primary">CDK1</name>
    <name type="synonym">CDC2</name>
    <name type="synonym">CDC28A</name>
    <name type="synonym">CDKN1</name>
    <name type="synonym">P34CDC2</name>
</gene>
<keyword id="KW-0002">3D-structure</keyword>
<keyword id="KW-0007">Acetylation</keyword>
<keyword id="KW-0025">Alternative splicing</keyword>
<keyword id="KW-0053">Apoptosis</keyword>
<keyword id="KW-0067">ATP-binding</keyword>
<keyword id="KW-0090">Biological rhythms</keyword>
<keyword id="KW-0131">Cell cycle</keyword>
<keyword id="KW-0132">Cell division</keyword>
<keyword id="KW-0963">Cytoplasm</keyword>
<keyword id="KW-0206">Cytoskeleton</keyword>
<keyword id="KW-1183">Host cell receptor for virus entry</keyword>
<keyword id="KW-0945">Host-virus interaction</keyword>
<keyword id="KW-1017">Isopeptide bond</keyword>
<keyword id="KW-0418">Kinase</keyword>
<keyword id="KW-0496">Mitochondrion</keyword>
<keyword id="KW-0498">Mitosis</keyword>
<keyword id="KW-0547">Nucleotide-binding</keyword>
<keyword id="KW-0539">Nucleus</keyword>
<keyword id="KW-0597">Phosphoprotein</keyword>
<keyword id="KW-1267">Proteomics identification</keyword>
<keyword id="KW-0675">Receptor</keyword>
<keyword id="KW-1185">Reference proteome</keyword>
<keyword id="KW-0723">Serine/threonine-protein kinase</keyword>
<keyword id="KW-0808">Transferase</keyword>
<keyword id="KW-0832">Ubl conjugation</keyword>
<organism>
    <name type="scientific">Homo sapiens</name>
    <name type="common">Human</name>
    <dbReference type="NCBI Taxonomy" id="9606"/>
    <lineage>
        <taxon>Eukaryota</taxon>
        <taxon>Metazoa</taxon>
        <taxon>Chordata</taxon>
        <taxon>Craniata</taxon>
        <taxon>Vertebrata</taxon>
        <taxon>Euteleostomi</taxon>
        <taxon>Mammalia</taxon>
        <taxon>Eutheria</taxon>
        <taxon>Euarchontoglires</taxon>
        <taxon>Primates</taxon>
        <taxon>Haplorrhini</taxon>
        <taxon>Catarrhini</taxon>
        <taxon>Hominidae</taxon>
        <taxon>Homo</taxon>
    </lineage>
</organism>
<sequence length="297" mass="34095">MEDYTKIEKIGEGTYGVVYKGRHKTTGQVVAMKKIRLESEEEGVPSTAIREISLLKELRHPNIVSLQDVLMQDSRLYLIFEFLSMDLKKYLDSIPPGQYMDSSLVKSYLYQILQGIVFCHSRRVLHRDLKPQNLLIDDKGTIKLADFGLARAFGIPIRVYTHEVVTLWYRSPEVLLGSARYSTPVDIWSIGTIFAELATKKPLFHGDSEIDQLFRIFRALGTPNNEVWPEVESLQDYKNTFPKWKPGSLASHVKNLDENGLDLLSKMLIYDPAKRISGKMALNHPYFNDLDNQIKKM</sequence>
<feature type="chain" id="PRO_0000085724" description="Cyclin-dependent kinase 1">
    <location>
        <begin position="1"/>
        <end position="297"/>
    </location>
</feature>
<feature type="domain" description="Protein kinase" evidence="3">
    <location>
        <begin position="4"/>
        <end position="287"/>
    </location>
</feature>
<feature type="active site" description="Proton acceptor" evidence="3 4">
    <location>
        <position position="128"/>
    </location>
</feature>
<feature type="binding site" evidence="3">
    <location>
        <begin position="10"/>
        <end position="18"/>
    </location>
    <ligand>
        <name>ATP</name>
        <dbReference type="ChEBI" id="CHEBI:30616"/>
    </ligand>
</feature>
<feature type="binding site" evidence="3">
    <location>
        <position position="33"/>
    </location>
    <ligand>
        <name>ATP</name>
        <dbReference type="ChEBI" id="CHEBI:30616"/>
    </ligand>
</feature>
<feature type="modified residue" description="N-acetylmethionine" evidence="58 63">
    <location>
        <position position="1"/>
    </location>
</feature>
<feature type="modified residue" description="Phosphotyrosine; by PKR" evidence="21">
    <location>
        <position position="4"/>
    </location>
</feature>
<feature type="modified residue" description="N6-acetyllysine; alternate" evidence="59">
    <location>
        <position position="6"/>
    </location>
</feature>
<feature type="modified residue" description="N6-acetyllysine; alternate" evidence="1">
    <location>
        <position position="9"/>
    </location>
</feature>
<feature type="modified residue" description="Phosphothreonine; by PKMYT1" evidence="49 56 60">
    <location>
        <position position="14"/>
    </location>
</feature>
<feature type="modified residue" description="Phosphotyrosine; by PKMYT1, WEE1, WEE2 and PKC/PRKCD" evidence="17 39 49 56 60">
    <location>
        <position position="15"/>
    </location>
</feature>
<feature type="modified residue" description="Phosphotyrosine" evidence="57 58">
    <location>
        <position position="19"/>
    </location>
</feature>
<feature type="modified residue" description="Phosphoserine" evidence="57 58 64">
    <location>
        <position position="39"/>
    </location>
</feature>
<feature type="modified residue" description="Phosphotyrosine" evidence="57">
    <location>
        <position position="77"/>
    </location>
</feature>
<feature type="modified residue" description="Phosphothreonine" evidence="64">
    <location>
        <position position="141"/>
    </location>
</feature>
<feature type="modified residue" description="Phosphothreonine; by CAK" evidence="20 60 61 62 64">
    <location>
        <position position="161"/>
    </location>
</feature>
<feature type="modified residue" description="Phosphoserine" evidence="58">
    <location>
        <position position="178"/>
    </location>
</feature>
<feature type="modified residue" description="Phosphothreonine" evidence="57 58">
    <location>
        <position position="222"/>
    </location>
</feature>
<feature type="modified residue" description="N6-succinyllysine" evidence="1">
    <location>
        <position position="245"/>
    </location>
</feature>
<feature type="modified residue" description="Phosphoserine" evidence="58">
    <location>
        <position position="248"/>
    </location>
</feature>
<feature type="cross-link" description="Glycyl lysine isopeptide (Lys-Gly) (interchain with G-Cter in SUMO2); alternate" evidence="65">
    <location>
        <position position="6"/>
    </location>
</feature>
<feature type="cross-link" description="Glycyl lysine isopeptide (Lys-Gly) (interchain with G-Cter in SUMO2); alternate" evidence="65">
    <location>
        <position position="9"/>
    </location>
</feature>
<feature type="cross-link" description="Glycyl lysine isopeptide (Lys-Gly) (interchain with G-Cter in SUMO2)" evidence="65">
    <location>
        <position position="20"/>
    </location>
</feature>
<feature type="cross-link" description="Glycyl lysine isopeptide (Lys-Gly) (interchain with G-Cter in SUMO2)" evidence="65">
    <location>
        <position position="139"/>
    </location>
</feature>
<feature type="splice variant" id="VSP_021375" description="In isoform 2." evidence="53">
    <location>
        <begin position="107"/>
        <end position="163"/>
    </location>
</feature>
<feature type="mutagenesis site" description="Constitutive polyubiquitination." evidence="21">
    <original>Y</original>
    <variation>D</variation>
    <variation>E</variation>
    <location>
        <position position="4"/>
    </location>
</feature>
<feature type="mutagenesis site" description="Abnormal cell cycle exhibiting only M-phase without completing either karyokinesis or cytokinesis." evidence="14">
    <original>TY</original>
    <variation>AF</variation>
    <location>
        <begin position="14"/>
        <end position="15"/>
    </location>
</feature>
<feature type="helix" evidence="69">
    <location>
        <begin position="1"/>
        <end position="3"/>
    </location>
</feature>
<feature type="strand" evidence="69">
    <location>
        <begin position="4"/>
        <end position="13"/>
    </location>
</feature>
<feature type="strand" evidence="69">
    <location>
        <begin position="16"/>
        <end position="23"/>
    </location>
</feature>
<feature type="turn" evidence="69">
    <location>
        <begin position="24"/>
        <end position="26"/>
    </location>
</feature>
<feature type="strand" evidence="69">
    <location>
        <begin position="29"/>
        <end position="35"/>
    </location>
</feature>
<feature type="helix" evidence="69">
    <location>
        <begin position="40"/>
        <end position="42"/>
    </location>
</feature>
<feature type="helix" evidence="69">
    <location>
        <begin position="46"/>
        <end position="57"/>
    </location>
</feature>
<feature type="strand" evidence="69">
    <location>
        <begin position="66"/>
        <end position="72"/>
    </location>
</feature>
<feature type="strand" evidence="69">
    <location>
        <begin position="75"/>
        <end position="81"/>
    </location>
</feature>
<feature type="strand" evidence="68">
    <location>
        <begin position="84"/>
        <end position="86"/>
    </location>
</feature>
<feature type="helix" evidence="69">
    <location>
        <begin position="87"/>
        <end position="93"/>
    </location>
</feature>
<feature type="helix" evidence="69">
    <location>
        <begin position="102"/>
        <end position="120"/>
    </location>
</feature>
<feature type="turn" evidence="69">
    <location>
        <begin position="121"/>
        <end position="123"/>
    </location>
</feature>
<feature type="helix" evidence="69">
    <location>
        <begin position="131"/>
        <end position="133"/>
    </location>
</feature>
<feature type="strand" evidence="69">
    <location>
        <begin position="134"/>
        <end position="136"/>
    </location>
</feature>
<feature type="strand" evidence="69">
    <location>
        <begin position="142"/>
        <end position="144"/>
    </location>
</feature>
<feature type="helix" evidence="70">
    <location>
        <begin position="149"/>
        <end position="152"/>
    </location>
</feature>
<feature type="strand" evidence="69">
    <location>
        <begin position="155"/>
        <end position="158"/>
    </location>
</feature>
<feature type="turn" evidence="67">
    <location>
        <begin position="161"/>
        <end position="163"/>
    </location>
</feature>
<feature type="helix" evidence="70">
    <location>
        <begin position="164"/>
        <end position="167"/>
    </location>
</feature>
<feature type="helix" evidence="69">
    <location>
        <begin position="172"/>
        <end position="175"/>
    </location>
</feature>
<feature type="strand" evidence="67">
    <location>
        <begin position="179"/>
        <end position="181"/>
    </location>
</feature>
<feature type="helix" evidence="69">
    <location>
        <begin position="184"/>
        <end position="199"/>
    </location>
</feature>
<feature type="helix" evidence="69">
    <location>
        <begin position="209"/>
        <end position="220"/>
    </location>
</feature>
<feature type="turn" evidence="69">
    <location>
        <begin position="225"/>
        <end position="227"/>
    </location>
</feature>
<feature type="helix" evidence="69">
    <location>
        <begin position="231"/>
        <end position="233"/>
    </location>
</feature>
<feature type="helix" evidence="69">
    <location>
        <begin position="249"/>
        <end position="251"/>
    </location>
</feature>
<feature type="helix" evidence="69">
    <location>
        <begin position="258"/>
        <end position="267"/>
    </location>
</feature>
<feature type="turn" evidence="69">
    <location>
        <begin position="272"/>
        <end position="274"/>
    </location>
</feature>
<feature type="helix" evidence="69">
    <location>
        <begin position="278"/>
        <end position="282"/>
    </location>
</feature>
<feature type="helix" evidence="69">
    <location>
        <begin position="285"/>
        <end position="287"/>
    </location>
</feature>
<feature type="helix" evidence="66">
    <location>
        <begin position="292"/>
        <end position="295"/>
    </location>
</feature>
<comment type="function">
    <text evidence="1 2 8 9 10 11 13 14 15 16 18 19 20 21 22 23 24 27 28 29 30 31 32 33 34 35 36 37 38 40 41 42 43 45 46 47 48">Plays a key role in the control of the eukaryotic cell cycle by modulating the centrosome cycle as well as mitotic onset; promotes G2-M transition via association with multiple interphase cyclins (PubMed:16407259, PubMed:16933150, PubMed:17459720, PubMed:18356527, PubMed:19509060, PubMed:19917720, PubMed:20171170, PubMed:20935635, PubMed:20937773, PubMed:21063390, PubMed:2188730, PubMed:23355470, PubMed:2344612, PubMed:23601106, PubMed:23602554, PubMed:25556658, PubMed:26829474, PubMed:27814491, PubMed:30139873, PubMed:30704899). Phosphorylates PARVA/actopaxin, APC, AMPH, APC, BARD1, Bcl-xL/BCL2L1, BRCA2, CALD1, CASP8, CDC7, CDC20, CDC25A, CDC25C, CC2D1A, CENPA, CSNK2 proteins/CKII, FZR1/CDH1, CDK7, CEBPB, CHAMP1, DMD/dystrophin, EEF1 proteins/EF-1, EZH2, KIF11/EG5, EGFR, FANCG, FOS, GFAP, GOLGA2/GM130, GRASP1, UBE2A/hHR6A, HIST1H1 proteins/histone H1, HMGA1, HIVEP3/KRC, KAT5, LMNA, LMNB, LBR, MKI67, LATS1, MAP1B, MAP4, MARCKS, MCM2, MCM4, MKLP1, MLST8, MYB, NEFH, NFIC, NPC/nuclear pore complex, PITPNM1/NIR2, NPM1, NCL, NUCKS1, NPM1/numatrin, ORC1, PRKAR2A, EEF1E1/p18, EIF3F/p47, p53/TP53, NONO/p54NRB, PAPOLA, PLEC/plectin, RB1, TPPP, UL40/R2, RAB4A, RAP1GAP, RBBP8/CtIP, RCC1, RPS6KB1/S6K1, KHDRBS1/SAM68, ESPL1, SKI, BIRC5/survivin, STIP1, TEX14, beta-tubulins, MAPT/TAU, NEDD1, VIM/vimentin, TK1, FOXO1, RUNX1/AML1, SAMHD1, SIRT2, CGAS and RUNX2 (PubMed:16407259, PubMed:16933150, PubMed:17459720, PubMed:18356527, PubMed:19202191, PubMed:19509060, PubMed:19917720, PubMed:20171170, PubMed:20935635, PubMed:20937773, PubMed:21063390, PubMed:2188730, PubMed:23355470, PubMed:2344612, PubMed:23601106, PubMed:23602554, PubMed:25012651, PubMed:25556658, PubMed:26829474, PubMed:27814491, PubMed:30704899, PubMed:32351706, PubMed:34741373). CDK1/CDC2-cyclin-B controls pronuclear union in interphase fertilized eggs (PubMed:18480403, PubMed:20360007). Essential for early stages of embryonic development (PubMed:18480403, PubMed:20360007). During G2 and early mitosis, CDC25A/B/C-mediated dephosphorylation activates CDK1/cyclin complexes which phosphorylate several substrates that trigger at least centrosome separation, Golgi dynamics, nuclear envelope breakdown and chromosome condensation (PubMed:18480403, PubMed:20360007, PubMed:2188730, PubMed:2344612, PubMed:30139873). Once chromosomes are condensed and aligned at the metaphase plate, CDK1 activity is switched off by WEE1- and PKMYT1-mediated phosphorylation to allow sister chromatid separation, chromosome decondensation, reformation of the nuclear envelope and cytokinesis (PubMed:18480403, PubMed:20360007). Phosphorylates KRT5 during prometaphase and metaphase (By similarity). Inactivated by PKR/EIF2AK2- and WEE1-mediated phosphorylation upon DNA damage to stop cell cycle and genome replication at the G2 checkpoint thus facilitating DNA repair (PubMed:20360007). Reactivated after successful DNA repair through WIP1-dependent signaling leading to CDC25A/B/C-mediated dephosphorylation and restoring cell cycle progression (PubMed:20395957). Catalyzes lamin (LMNA, LMNB1 and LMNB2) phosphorylation at the onset of mitosis, promoting nuclear envelope breakdown (PubMed:2188730, PubMed:2344612, PubMed:37788673). In proliferating cells, CDK1-mediated FOXO1 phosphorylation at the G2-M phase represses FOXO1 interaction with 14-3-3 proteins and thereby promotes FOXO1 nuclear accumulation and transcription factor activity, leading to cell death of postmitotic neurons (PubMed:18356527). The phosphorylation of beta-tubulins regulates microtubule dynamics during mitosis (PubMed:16371510). NEDD1 phosphorylation promotes PLK1-mediated NEDD1 phosphorylation and subsequent targeting of the gamma-tubulin ring complex (gTuRC) to the centrosome, an important step for spindle formation (PubMed:19509060). In addition, CC2D1A phosphorylation regulates CC2D1A spindle pole localization and association with SCC1/RAD21 and centriole cohesion during mitosis (PubMed:20171170). The phosphorylation of Bcl-xL/BCL2L1 after prolongated G2 arrest upon DNA damage triggers apoptosis (PubMed:19917720). In contrast, CASP8 phosphorylation during mitosis prevents its activation by proteolysis and subsequent apoptosis (PubMed:20937773). This phosphorylation occurs in cancer cell lines, as well as in primary breast tissues and lymphocytes (PubMed:20937773). EZH2 phosphorylation promotes H3K27me3 maintenance and epigenetic gene silencing (PubMed:20935635). CALD1 phosphorylation promotes Schwann cell migration during peripheral nerve regeneration (By similarity). CDK1-cyclin-B complex phosphorylates NCKAP5L and mediates its dissociation from centrosomes during mitosis (PubMed:26549230). Regulates the amplitude of the cyclic expression of the core clock gene BMAL1 by phosphorylating its transcriptional repressor NR1D1, and this phosphorylation is necessary for SCF(FBXW7)-mediated ubiquitination and proteasomal degradation of NR1D1 (PubMed:27238018). Phosphorylates EML3 at 'Thr-881' which is essential for its interaction with HAUS augmin-like complex and TUBG1 (PubMed:30723163). Phosphorylates CGAS during mitosis, leading to its inhibition, thereby preventing CGAS activation by self DNA during mitosis (PubMed:32351706). Phosphorylates SKA3 on multiple sites during mitosis which promotes SKA3 binding to the NDC80 complex and anchoring of the SKA complex to kinetochores, to enable stable attachment of mitotic spindle microtubules to kinetochores (PubMed:28479321, PubMed:31804178, PubMed:32491969).</text>
</comment>
<comment type="function">
    <text evidence="26">(Microbial infection) Acts as a receptor for hepatitis C virus (HCV) in hepatocytes and facilitates its cell entry.</text>
</comment>
<comment type="catalytic activity">
    <reaction evidence="15 27 28 29 35 41">
        <text>L-seryl-[protein] + ATP = O-phospho-L-seryl-[protein] + ADP + H(+)</text>
        <dbReference type="Rhea" id="RHEA:17989"/>
        <dbReference type="Rhea" id="RHEA-COMP:9863"/>
        <dbReference type="Rhea" id="RHEA-COMP:11604"/>
        <dbReference type="ChEBI" id="CHEBI:15378"/>
        <dbReference type="ChEBI" id="CHEBI:29999"/>
        <dbReference type="ChEBI" id="CHEBI:30616"/>
        <dbReference type="ChEBI" id="CHEBI:83421"/>
        <dbReference type="ChEBI" id="CHEBI:456216"/>
        <dbReference type="EC" id="2.7.11.22"/>
    </reaction>
</comment>
<comment type="catalytic activity">
    <reaction evidence="28 35 41">
        <text>L-threonyl-[protein] + ATP = O-phospho-L-threonyl-[protein] + ADP + H(+)</text>
        <dbReference type="Rhea" id="RHEA:46608"/>
        <dbReference type="Rhea" id="RHEA-COMP:11060"/>
        <dbReference type="Rhea" id="RHEA-COMP:11605"/>
        <dbReference type="ChEBI" id="CHEBI:15378"/>
        <dbReference type="ChEBI" id="CHEBI:30013"/>
        <dbReference type="ChEBI" id="CHEBI:30616"/>
        <dbReference type="ChEBI" id="CHEBI:61977"/>
        <dbReference type="ChEBI" id="CHEBI:456216"/>
        <dbReference type="EC" id="2.7.11.22"/>
    </reaction>
</comment>
<comment type="catalytic activity">
    <reaction evidence="1">
        <text>[DNA-directed RNA polymerase] + ATP = phospho-[DNA-directed RNA polymerase] + ADP + H(+)</text>
        <dbReference type="Rhea" id="RHEA:10216"/>
        <dbReference type="Rhea" id="RHEA-COMP:11321"/>
        <dbReference type="Rhea" id="RHEA-COMP:11322"/>
        <dbReference type="ChEBI" id="CHEBI:15378"/>
        <dbReference type="ChEBI" id="CHEBI:30616"/>
        <dbReference type="ChEBI" id="CHEBI:43176"/>
        <dbReference type="ChEBI" id="CHEBI:68546"/>
        <dbReference type="ChEBI" id="CHEBI:456216"/>
        <dbReference type="EC" id="2.7.11.23"/>
    </reaction>
</comment>
<comment type="activity regulation">
    <text evidence="11 20 40 49 50">Phosphorylation at Thr-14 or Tyr-15 inactivates the enzyme, while phosphorylation at Thr-161 activates it (PubMed:20360007, PubMed:7569953). Activated through a multistep process; binding to cyclin-B is required for relocation of cyclin-kinase complexes to the nucleus, activated by CAK/CDK7-mediated phosphorylation on Thr-161, and CDC25-mediated dephosphorylation of inhibitory phosphorylation on Thr-14 and Tyr-15 (PubMed:20360007, PubMed:7569953). Activity is restricted during S-phase in an ATR-dependent manner to prevent premature entry into G2 (PubMed:30139873). Repressed by the CDK inhibitors CDKN1A/p21 and CDKN1B/p27 during the G1 phase and by CDKN1A/p21 at the G1-S checkpoint upon DNA damage. Transient activation by rapid and transient dephosphorylation at Tyr-15 triggered by TGFB1 (PubMed:17459720). Inhibited by flavopiridol and derivatives, pyrimidine derivatives, pyridine derivatives, purine derivatives, staurosporine, paullones, oxoindoles, indazole analogs, indolin-2-ones, pyrazolo[3,4-b]pyridines, imidazo[1,2-a]pyridine (AZ703), thiazolinone analogs(RO-3306), thiazol urea, macrocyclic quinoxalin-2-one, pyrrolo[2,3-a]carbazole, pyrazolo[1,5-a]-1,3,5-triazine, pyrazolo[1,5-a]pyrimidine (Dinaciclib, SCH 727965), 2-(1-ethyl-2-hydroxyethylamino)-6-benzylamino-9-isopropylpurine (roscovitine), olomoucine, AG-024322, AT-7519, P276-00, R547/Ro-4584820 and SNS-032/BMS-387032 (PubMed:9030781).</text>
</comment>
<comment type="subunit">
    <text evidence="1 5 7 11 20 25 27 29 33 36 51">Forms a stable but non-covalent complex with a regulatory subunit and with a cyclin (PubMed:20360007). The cyclin subunit imparts substrate specificity to the complex (PubMed:20360007). Interacts with cyclins-B (CCNB1, CCNB2 and CCNB3) to form a serine/threonine kinase holoenzyme complex also known as maturation promoting factor (MPF) (PubMed:20360007, PubMed:2188730, PubMed:2344612). Promotes G2-M transition when in complex with a cyclin-B (PubMed:20360007). Can also form CDK1-cylin-D and CDK1-cyclin-E complexes that phosphorylate RB1 in vitro (PubMed:17459720). Associates with cyclins-A and B1 during S-phase in regenerating hepatocytes (PubMed:20360007). Interacts with DLGAP5 (PubMed:15145941). Binds to the CDK inhibitors CDKN1A/p21 and CDKN1B/p27. Interacts with catalytically active CCNB1 and RALBP1 during mitosis to form an endocytotic complex during interphase (PubMed:12775724). Interacts with FANCC (PubMed:9242535). Interacts with CEP63; this interaction recruits CDK1 to centrosomes (PubMed:21406398). Interacts with CENPA (PubMed:25556658). Interacts with NR1D1 (PubMed:27238018). Interacts with proteasome subunit PSMA8; to participate in meiosis progression during spermatogenesis (By similarity).</text>
</comment>
<comment type="subunit">
    <molecule>Isoform 2</molecule>
    <text evidence="52">Unable to complex with cyclin-B1 and also fails to bind to CDKN1A/p21.</text>
</comment>
<comment type="subunit">
    <text evidence="44">(Microbial infection) Interacts with severe fever with thrombocytopenia syndrome virus (SFTSV) NSs; this interaction is inclusion body dependent, it inhibits the formation and nuclear import of the cyclin B1-CDK1 complex and leads to cell cycle arrest.</text>
</comment>
<comment type="interaction">
    <interactant intactId="EBI-444308">
        <id>P06493</id>
    </interactant>
    <interactant intactId="EBI-347640">
        <id>Q86V81</id>
        <label>ALYREF</label>
    </interactant>
    <organismsDiffer>false</organismsDiffer>
    <experiments>4</experiments>
</comment>
<comment type="interaction">
    <interactant intactId="EBI-444308">
        <id>P06493</id>
    </interactant>
    <interactant intactId="EBI-77613">
        <id>P05067</id>
        <label>APP</label>
    </interactant>
    <organismsDiffer>false</organismsDiffer>
    <experiments>3</experiments>
</comment>
<comment type="interaction">
    <interactant intactId="EBI-444308">
        <id>P06493</id>
    </interactant>
    <interactant intactId="EBI-518823">
        <id>O15392</id>
        <label>BIRC5</label>
    </interactant>
    <organismsDiffer>false</organismsDiffer>
    <experiments>6</experiments>
</comment>
<comment type="interaction">
    <interactant intactId="EBI-444308">
        <id>P06493</id>
    </interactant>
    <interactant intactId="EBI-495332">
        <id>P14635</id>
        <label>CCNB1</label>
    </interactant>
    <organismsDiffer>false</organismsDiffer>
    <experiments>28</experiments>
</comment>
<comment type="interaction">
    <interactant intactId="EBI-444308">
        <id>P06493</id>
    </interactant>
    <interactant intactId="EBI-974439">
        <id>P30307</id>
        <label>CDC25C</label>
    </interactant>
    <organismsDiffer>false</organismsDiffer>
    <experiments>3</experiments>
</comment>
<comment type="interaction">
    <interactant intactId="EBI-444308">
        <id>P06493</id>
    </interactant>
    <interactant intactId="EBI-374862">
        <id>Q99741</id>
        <label>CDC6</label>
    </interactant>
    <organismsDiffer>false</organismsDiffer>
    <experiments>2</experiments>
</comment>
<comment type="interaction">
    <interactant intactId="EBI-444308">
        <id>P06493</id>
    </interactant>
    <interactant intactId="EBI-375077">
        <id>P38936</id>
        <label>CDKN1A</label>
    </interactant>
    <organismsDiffer>false</organismsDiffer>
    <experiments>10</experiments>
</comment>
<comment type="interaction">
    <interactant intactId="EBI-444308">
        <id>P06493</id>
    </interactant>
    <interactant intactId="EBI-519280">
        <id>P46527</id>
        <label>CDKN1B</label>
    </interactant>
    <organismsDiffer>false</organismsDiffer>
    <experiments>9</experiments>
</comment>
<comment type="interaction">
    <interactant intactId="EBI-444308">
        <id>P06493</id>
    </interactant>
    <interactant intactId="EBI-456371">
        <id>P61024</id>
        <label>CKS1B</label>
    </interactant>
    <organismsDiffer>false</organismsDiffer>
    <experiments>13</experiments>
</comment>
<comment type="interaction">
    <interactant intactId="EBI-444308">
        <id>P06493</id>
    </interactant>
    <interactant intactId="EBI-15621191">
        <id>O75618-1</id>
        <label>DEDD</label>
    </interactant>
    <organismsDiffer>false</organismsDiffer>
    <experiments>2</experiments>
</comment>
<comment type="interaction">
    <interactant intactId="EBI-444308">
        <id>P06493</id>
    </interactant>
    <interactant intactId="EBI-351007">
        <id>P36957</id>
        <label>DLST</label>
    </interactant>
    <organismsDiffer>false</organismsDiffer>
    <experiments>3</experiments>
</comment>
<comment type="interaction">
    <interactant intactId="EBI-444308">
        <id>P06493</id>
    </interactant>
    <interactant intactId="EBI-297353">
        <id>P00533</id>
        <label>EGFR</label>
    </interactant>
    <organismsDiffer>false</organismsDiffer>
    <experiments>3</experiments>
</comment>
<comment type="interaction">
    <interactant intactId="EBI-444308">
        <id>P06493</id>
    </interactant>
    <interactant intactId="EBI-640775">
        <id>P19525</id>
        <label>EIF2AK2</label>
    </interactant>
    <organismsDiffer>false</organismsDiffer>
    <experiments>4</experiments>
</comment>
<comment type="interaction">
    <interactant intactId="EBI-444308">
        <id>P06493</id>
    </interactant>
    <interactant intactId="EBI-1108782">
        <id>Q12778</id>
        <label>FOXO1</label>
    </interactant>
    <organismsDiffer>false</organismsDiffer>
    <experiments>5</experiments>
</comment>
<comment type="interaction">
    <interactant intactId="EBI-444308">
        <id>P06493</id>
    </interactant>
    <interactant intactId="EBI-444209">
        <id>O95835</id>
        <label>LATS1</label>
    </interactant>
    <organismsDiffer>false</organismsDiffer>
    <experiments>3</experiments>
</comment>
<comment type="interaction">
    <interactant intactId="EBI-444308">
        <id>P06493</id>
    </interactant>
    <interactant intactId="EBI-9090282">
        <id>P27986-2</id>
        <label>PIK3R1</label>
    </interactant>
    <organismsDiffer>false</organismsDiffer>
    <experiments>3</experiments>
</comment>
<comment type="interaction">
    <interactant intactId="EBI-444308">
        <id>P06493</id>
    </interactant>
    <interactant intactId="EBI-495308">
        <id>Q99640</id>
        <label>PKMYT1</label>
    </interactant>
    <organismsDiffer>false</organismsDiffer>
    <experiments>9</experiments>
</comment>
<comment type="interaction">
    <interactant intactId="EBI-444308">
        <id>P06493</id>
    </interactant>
    <interactant intactId="EBI-6932080">
        <id>O43508</id>
        <label>TNFSF12</label>
    </interactant>
    <organismsDiffer>false</organismsDiffer>
    <experiments>3</experiments>
</comment>
<comment type="interaction">
    <interactant intactId="EBI-444308">
        <id>P06493</id>
    </interactant>
    <interactant intactId="EBI-3390054">
        <id>P0CG48</id>
        <label>UBC</label>
    </interactant>
    <organismsDiffer>false</organismsDiffer>
    <experiments>6</experiments>
</comment>
<comment type="interaction">
    <interactant intactId="EBI-444308">
        <id>P06493</id>
    </interactant>
    <interactant intactId="EBI-354158">
        <id>P21796</id>
        <label>VDAC1</label>
    </interactant>
    <organismsDiffer>false</organismsDiffer>
    <experiments>3</experiments>
</comment>
<comment type="interaction">
    <interactant intactId="EBI-444308">
        <id>P06493</id>
    </interactant>
    <interactant intactId="EBI-617698">
        <id>P03070</id>
    </interactant>
    <organismsDiffer>true</organismsDiffer>
    <experiments>2</experiments>
</comment>
<comment type="subcellular location">
    <subcellularLocation>
        <location evidence="1">Nucleus</location>
    </subcellularLocation>
    <subcellularLocation>
        <location evidence="1">Cytoplasm</location>
    </subcellularLocation>
    <subcellularLocation>
        <location evidence="18">Mitochondrion</location>
    </subcellularLocation>
    <subcellularLocation>
        <location evidence="6">Cytoplasm</location>
        <location evidence="6">Cytoskeleton</location>
        <location evidence="6">Microtubule organizing center</location>
        <location evidence="6">Centrosome</location>
    </subcellularLocation>
    <subcellularLocation>
        <location>Cytoplasm</location>
        <location>Cytoskeleton</location>
        <location>Spindle</location>
    </subcellularLocation>
    <text>Cytoplasmic during the interphase. Colocalizes with SIRT2 on centrosome during prophase and on splindle fibers during metaphase of the mitotic cell cycle. Reversibly translocated from cytoplasm to nucleus when phosphorylated before G2-M transition when associated with cyclin-B1. Accumulates in mitochondria in G2-arrested cells upon DNA-damage.</text>
</comment>
<comment type="alternative products">
    <event type="alternative splicing"/>
    <isoform>
        <id>P06493-1</id>
        <name>1</name>
        <sequence type="displayed"/>
    </isoform>
    <isoform>
        <id>P06493-2</id>
        <name>2</name>
        <name>CDC2deltaT</name>
        <sequence type="described" ref="VSP_021375"/>
    </isoform>
</comment>
<comment type="tissue specificity">
    <molecule>Isoform 2</molecule>
    <text evidence="52">Found in breast cancer tissues.</text>
</comment>
<comment type="induction">
    <text evidence="11 12">Follows a cyclic expression; during interphase, accumulates gradually following G1, S to reach a critical threshold at the end of G2, which promotes self-activation and triggers onset of mitosis. Induced transiently by TGFB1 at an early phase of TGFB1-mediated apoptosis, but later repressed. Triggered by CKS1B during mitotic entry in breast cancer cells. Down-regulated under genotoxic stresses triggered by PKR/EIF2AK2-mediated phosphorylation.</text>
</comment>
<comment type="PTM">
    <text evidence="17 20 21 39 49">Phosphorylation at Thr-161 by CAK/CDK7 activates kinase activity (PubMed:20360007). Phosphorylation at Thr-14 and Tyr-15 by PKMYT1 prevents nuclear translocation (PubMed:7569953). Phosphorylation at Tyr-15 by WEE1 and WEE2 inhibits the protein kinase activity and acts as a negative regulator of entry into mitosis (G2 to M transition) (PubMed:20360007). Phosphorylation by PKMYT1 and WEE1 takes place during mitosis to keep CDK1-cyclin-B complexes inactive until the end of G2 (PubMed:20360007, PubMed:7569953). By the end of G2, PKMYT1 and WEE1 are inactivated, but CDC25A and CDC25B are activated (PubMed:20360007). Dephosphorylation by active CDC25A and CDC25B at Thr-14 and Tyr-15, leads to CDK1 activation at the G2-M transition (PubMed:20360007). Phosphorylation at Tyr-15 by WEE2 during oogenesis is required to maintain meiotic arrest in oocytes during the germinal vesicle (GV) stage, a long period of quiescence at dictyate prophase I, leading to prevent meiotic reentry (PubMed:29606300). Phosphorylation by WEE2 is also required for metaphase II exit during egg activation to ensure exit from meiosis in oocytes and promote pronuclear formation (PubMed:29606300). Phosphorylated at Tyr-4 by PKR/EIF2AK2 upon genotoxic stress (PubMed:20395957). This phosphorylation triggers CDK1 polyubiquitination and subsequent proteolysis, thus leading to G2 arrest (PubMed:20395957). In response to UV irradiation, phosphorylation at Tyr-15 by PRKCD activates the G2/M DNA damage checkpoint (PubMed:19917613).</text>
</comment>
<comment type="PTM">
    <text evidence="21">Polyubiquitinated upon genotoxic stress.</text>
</comment>
<comment type="miscellaneous">
    <text evidence="55">As a key regulator of the cell cycle, CDK1 is a potent therapeutic target for inhibitors in cancer treatment.</text>
</comment>
<comment type="similarity">
    <text evidence="54">Belongs to the protein kinase superfamily. CMGC Ser/Thr protein kinase family. CDC2/CDKX subfamily.</text>
</comment>
<comment type="sequence caution" evidence="54">
    <conflict type="erroneous gene model prediction">
        <sequence resource="EMBL-CDS" id="EAW54204"/>
    </conflict>
</comment>
<evidence type="ECO:0000250" key="1">
    <source>
        <dbReference type="UniProtKB" id="P11440"/>
    </source>
</evidence>
<evidence type="ECO:0000250" key="2">
    <source>
        <dbReference type="UniProtKB" id="P39951"/>
    </source>
</evidence>
<evidence type="ECO:0000255" key="3">
    <source>
        <dbReference type="PROSITE-ProRule" id="PRU00159"/>
    </source>
</evidence>
<evidence type="ECO:0000255" key="4">
    <source>
        <dbReference type="PROSITE-ProRule" id="PRU10027"/>
    </source>
</evidence>
<evidence type="ECO:0000269" key="5">
    <source>
    </source>
</evidence>
<evidence type="ECO:0000269" key="6">
    <source>
    </source>
</evidence>
<evidence type="ECO:0000269" key="7">
    <source>
    </source>
</evidence>
<evidence type="ECO:0000269" key="8">
    <source>
    </source>
</evidence>
<evidence type="ECO:0000269" key="9">
    <source>
    </source>
</evidence>
<evidence type="ECO:0000269" key="10">
    <source>
    </source>
</evidence>
<evidence type="ECO:0000269" key="11">
    <source>
    </source>
</evidence>
<evidence type="ECO:0000269" key="12">
    <source>
    </source>
</evidence>
<evidence type="ECO:0000269" key="13">
    <source>
    </source>
</evidence>
<evidence type="ECO:0000269" key="14">
    <source>
    </source>
</evidence>
<evidence type="ECO:0000269" key="15">
    <source>
    </source>
</evidence>
<evidence type="ECO:0000269" key="16">
    <source>
    </source>
</evidence>
<evidence type="ECO:0000269" key="17">
    <source>
    </source>
</evidence>
<evidence type="ECO:0000269" key="18">
    <source>
    </source>
</evidence>
<evidence type="ECO:0000269" key="19">
    <source>
    </source>
</evidence>
<evidence type="ECO:0000269" key="20">
    <source>
    </source>
</evidence>
<evidence type="ECO:0000269" key="21">
    <source>
    </source>
</evidence>
<evidence type="ECO:0000269" key="22">
    <source>
    </source>
</evidence>
<evidence type="ECO:0000269" key="23">
    <source>
    </source>
</evidence>
<evidence type="ECO:0000269" key="24">
    <source>
    </source>
</evidence>
<evidence type="ECO:0000269" key="25">
    <source>
    </source>
</evidence>
<evidence type="ECO:0000269" key="26">
    <source>
    </source>
</evidence>
<evidence type="ECO:0000269" key="27">
    <source>
    </source>
</evidence>
<evidence type="ECO:0000269" key="28">
    <source>
    </source>
</evidence>
<evidence type="ECO:0000269" key="29">
    <source>
    </source>
</evidence>
<evidence type="ECO:0000269" key="30">
    <source>
    </source>
</evidence>
<evidence type="ECO:0000269" key="31">
    <source>
    </source>
</evidence>
<evidence type="ECO:0000269" key="32">
    <source>
    </source>
</evidence>
<evidence type="ECO:0000269" key="33">
    <source>
    </source>
</evidence>
<evidence type="ECO:0000269" key="34">
    <source>
    </source>
</evidence>
<evidence type="ECO:0000269" key="35">
    <source>
    </source>
</evidence>
<evidence type="ECO:0000269" key="36">
    <source>
    </source>
</evidence>
<evidence type="ECO:0000269" key="37">
    <source>
    </source>
</evidence>
<evidence type="ECO:0000269" key="38">
    <source>
    </source>
</evidence>
<evidence type="ECO:0000269" key="39">
    <source>
    </source>
</evidence>
<evidence type="ECO:0000269" key="40">
    <source>
    </source>
</evidence>
<evidence type="ECO:0000269" key="41">
    <source>
    </source>
</evidence>
<evidence type="ECO:0000269" key="42">
    <source>
    </source>
</evidence>
<evidence type="ECO:0000269" key="43">
    <source>
    </source>
</evidence>
<evidence type="ECO:0000269" key="44">
    <source>
    </source>
</evidence>
<evidence type="ECO:0000269" key="45">
    <source>
    </source>
</evidence>
<evidence type="ECO:0000269" key="46">
    <source>
    </source>
</evidence>
<evidence type="ECO:0000269" key="47">
    <source>
    </source>
</evidence>
<evidence type="ECO:0000269" key="48">
    <source>
    </source>
</evidence>
<evidence type="ECO:0000269" key="49">
    <source>
    </source>
</evidence>
<evidence type="ECO:0000269" key="50">
    <source>
    </source>
</evidence>
<evidence type="ECO:0000269" key="51">
    <source>
    </source>
</evidence>
<evidence type="ECO:0000269" key="52">
    <source>
    </source>
</evidence>
<evidence type="ECO:0000303" key="53">
    <source>
    </source>
</evidence>
<evidence type="ECO:0000305" key="54"/>
<evidence type="ECO:0000305" key="55">
    <source>
    </source>
</evidence>
<evidence type="ECO:0007744" key="56">
    <source>
    </source>
</evidence>
<evidence type="ECO:0007744" key="57">
    <source>
    </source>
</evidence>
<evidence type="ECO:0007744" key="58">
    <source>
    </source>
</evidence>
<evidence type="ECO:0007744" key="59">
    <source>
    </source>
</evidence>
<evidence type="ECO:0007744" key="60">
    <source>
    </source>
</evidence>
<evidence type="ECO:0007744" key="61">
    <source>
    </source>
</evidence>
<evidence type="ECO:0007744" key="62">
    <source>
    </source>
</evidence>
<evidence type="ECO:0007744" key="63">
    <source>
    </source>
</evidence>
<evidence type="ECO:0007744" key="64">
    <source>
    </source>
</evidence>
<evidence type="ECO:0007744" key="65">
    <source>
    </source>
</evidence>
<evidence type="ECO:0007829" key="66">
    <source>
        <dbReference type="PDB" id="4YC3"/>
    </source>
</evidence>
<evidence type="ECO:0007829" key="67">
    <source>
        <dbReference type="PDB" id="4YC6"/>
    </source>
</evidence>
<evidence type="ECO:0007829" key="68">
    <source>
        <dbReference type="PDB" id="5LQF"/>
    </source>
</evidence>
<evidence type="ECO:0007829" key="69">
    <source>
        <dbReference type="PDB" id="6GU2"/>
    </source>
</evidence>
<evidence type="ECO:0007829" key="70">
    <source>
        <dbReference type="PDB" id="6GU6"/>
    </source>
</evidence>
<name>CDK1_HUMAN</name>
<proteinExistence type="evidence at protein level"/>
<reference key="1">
    <citation type="journal article" date="1987" name="Nature">
        <title>Complementation used to clone a human homologue of the fission yeast cell cycle control gene cdc2.</title>
        <authorList>
            <person name="Lee M.G."/>
            <person name="Nurse P."/>
        </authorList>
    </citation>
    <scope>NUCLEOTIDE SEQUENCE [MRNA] (ISOFORM 1)</scope>
</reference>
<reference key="2">
    <citation type="journal article" date="1998" name="Cancer Res.">
        <title>T-loop deletion of CDC2 from breast cancer tissues eliminates binding to cyclin B1 and cyclin-dependent kinase inhibitor p21.</title>
        <authorList>
            <person name="Ohta T."/>
            <person name="Okamoto K."/>
            <person name="Isohashi F."/>
            <person name="Shibata K."/>
            <person name="Fukuda M."/>
            <person name="Yamaguchi S."/>
            <person name="Xiong Y."/>
        </authorList>
    </citation>
    <scope>NUCLEOTIDE SEQUENCE [MRNA] (ISOFORM 2)</scope>
    <scope>TISSUE SPECIFICITY</scope>
    <source>
        <tissue>Mammary cancer</tissue>
    </source>
</reference>
<reference key="3">
    <citation type="journal article" date="2004" name="Nat. Genet.">
        <title>Complete sequencing and characterization of 21,243 full-length human cDNAs.</title>
        <authorList>
            <person name="Ota T."/>
            <person name="Suzuki Y."/>
            <person name="Nishikawa T."/>
            <person name="Otsuki T."/>
            <person name="Sugiyama T."/>
            <person name="Irie R."/>
            <person name="Wakamatsu A."/>
            <person name="Hayashi K."/>
            <person name="Sato H."/>
            <person name="Nagai K."/>
            <person name="Kimura K."/>
            <person name="Makita H."/>
            <person name="Sekine M."/>
            <person name="Obayashi M."/>
            <person name="Nishi T."/>
            <person name="Shibahara T."/>
            <person name="Tanaka T."/>
            <person name="Ishii S."/>
            <person name="Yamamoto J."/>
            <person name="Saito K."/>
            <person name="Kawai Y."/>
            <person name="Isono Y."/>
            <person name="Nakamura Y."/>
            <person name="Nagahari K."/>
            <person name="Murakami K."/>
            <person name="Yasuda T."/>
            <person name="Iwayanagi T."/>
            <person name="Wagatsuma M."/>
            <person name="Shiratori A."/>
            <person name="Sudo H."/>
            <person name="Hosoiri T."/>
            <person name="Kaku Y."/>
            <person name="Kodaira H."/>
            <person name="Kondo H."/>
            <person name="Sugawara M."/>
            <person name="Takahashi M."/>
            <person name="Kanda K."/>
            <person name="Yokoi T."/>
            <person name="Furuya T."/>
            <person name="Kikkawa E."/>
            <person name="Omura Y."/>
            <person name="Abe K."/>
            <person name="Kamihara K."/>
            <person name="Katsuta N."/>
            <person name="Sato K."/>
            <person name="Tanikawa M."/>
            <person name="Yamazaki M."/>
            <person name="Ninomiya K."/>
            <person name="Ishibashi T."/>
            <person name="Yamashita H."/>
            <person name="Murakawa K."/>
            <person name="Fujimori K."/>
            <person name="Tanai H."/>
            <person name="Kimata M."/>
            <person name="Watanabe M."/>
            <person name="Hiraoka S."/>
            <person name="Chiba Y."/>
            <person name="Ishida S."/>
            <person name="Ono Y."/>
            <person name="Takiguchi S."/>
            <person name="Watanabe S."/>
            <person name="Yosida M."/>
            <person name="Hotuta T."/>
            <person name="Kusano J."/>
            <person name="Kanehori K."/>
            <person name="Takahashi-Fujii A."/>
            <person name="Hara H."/>
            <person name="Tanase T.-O."/>
            <person name="Nomura Y."/>
            <person name="Togiya S."/>
            <person name="Komai F."/>
            <person name="Hara R."/>
            <person name="Takeuchi K."/>
            <person name="Arita M."/>
            <person name="Imose N."/>
            <person name="Musashino K."/>
            <person name="Yuuki H."/>
            <person name="Oshima A."/>
            <person name="Sasaki N."/>
            <person name="Aotsuka S."/>
            <person name="Yoshikawa Y."/>
            <person name="Matsunawa H."/>
            <person name="Ichihara T."/>
            <person name="Shiohata N."/>
            <person name="Sano S."/>
            <person name="Moriya S."/>
            <person name="Momiyama H."/>
            <person name="Satoh N."/>
            <person name="Takami S."/>
            <person name="Terashima Y."/>
            <person name="Suzuki O."/>
            <person name="Nakagawa S."/>
            <person name="Senoh A."/>
            <person name="Mizoguchi H."/>
            <person name="Goto Y."/>
            <person name="Shimizu F."/>
            <person name="Wakebe H."/>
            <person name="Hishigaki H."/>
            <person name="Watanabe T."/>
            <person name="Sugiyama A."/>
            <person name="Takemoto M."/>
            <person name="Kawakami B."/>
            <person name="Yamazaki M."/>
            <person name="Watanabe K."/>
            <person name="Kumagai A."/>
            <person name="Itakura S."/>
            <person name="Fukuzumi Y."/>
            <person name="Fujimori Y."/>
            <person name="Komiyama M."/>
            <person name="Tashiro H."/>
            <person name="Tanigami A."/>
            <person name="Fujiwara T."/>
            <person name="Ono T."/>
            <person name="Yamada K."/>
            <person name="Fujii Y."/>
            <person name="Ozaki K."/>
            <person name="Hirao M."/>
            <person name="Ohmori Y."/>
            <person name="Kawabata A."/>
            <person name="Hikiji T."/>
            <person name="Kobatake N."/>
            <person name="Inagaki H."/>
            <person name="Ikema Y."/>
            <person name="Okamoto S."/>
            <person name="Okitani R."/>
            <person name="Kawakami T."/>
            <person name="Noguchi S."/>
            <person name="Itoh T."/>
            <person name="Shigeta K."/>
            <person name="Senba T."/>
            <person name="Matsumura K."/>
            <person name="Nakajima Y."/>
            <person name="Mizuno T."/>
            <person name="Morinaga M."/>
            <person name="Sasaki M."/>
            <person name="Togashi T."/>
            <person name="Oyama M."/>
            <person name="Hata H."/>
            <person name="Watanabe M."/>
            <person name="Komatsu T."/>
            <person name="Mizushima-Sugano J."/>
            <person name="Satoh T."/>
            <person name="Shirai Y."/>
            <person name="Takahashi Y."/>
            <person name="Nakagawa K."/>
            <person name="Okumura K."/>
            <person name="Nagase T."/>
            <person name="Nomura N."/>
            <person name="Kikuchi H."/>
            <person name="Masuho Y."/>
            <person name="Yamashita R."/>
            <person name="Nakai K."/>
            <person name="Yada T."/>
            <person name="Nakamura Y."/>
            <person name="Ohara O."/>
            <person name="Isogai T."/>
            <person name="Sugano S."/>
        </authorList>
    </citation>
    <scope>NUCLEOTIDE SEQUENCE [LARGE SCALE MRNA] (ISOFORM 1)</scope>
</reference>
<reference key="4">
    <citation type="submission" date="2003-05" db="EMBL/GenBank/DDBJ databases">
        <title>Cloning of human full-length CDSs in BD Creator(TM) system donor vector.</title>
        <authorList>
            <person name="Kalnine N."/>
            <person name="Chen X."/>
            <person name="Rolfs A."/>
            <person name="Halleck A."/>
            <person name="Hines L."/>
            <person name="Eisenstein S."/>
            <person name="Koundinya M."/>
            <person name="Raphael J."/>
            <person name="Moreira D."/>
            <person name="Kelley T."/>
            <person name="LaBaer J."/>
            <person name="Lin Y."/>
            <person name="Phelan M."/>
            <person name="Farmer A."/>
        </authorList>
    </citation>
    <scope>NUCLEOTIDE SEQUENCE [LARGE SCALE MRNA] (ISOFORM 1)</scope>
</reference>
<reference key="5">
    <citation type="submission" date="2002-05" db="EMBL/GenBank/DDBJ databases">
        <authorList>
            <consortium name="NIEHS SNPs program"/>
        </authorList>
    </citation>
    <scope>NUCLEOTIDE SEQUENCE [GENOMIC DNA]</scope>
</reference>
<reference key="6">
    <citation type="journal article" date="2004" name="Nature">
        <title>The DNA sequence and comparative analysis of human chromosome 10.</title>
        <authorList>
            <person name="Deloukas P."/>
            <person name="Earthrowl M.E."/>
            <person name="Grafham D.V."/>
            <person name="Rubenfield M."/>
            <person name="French L."/>
            <person name="Steward C.A."/>
            <person name="Sims S.K."/>
            <person name="Jones M.C."/>
            <person name="Searle S."/>
            <person name="Scott C."/>
            <person name="Howe K."/>
            <person name="Hunt S.E."/>
            <person name="Andrews T.D."/>
            <person name="Gilbert J.G.R."/>
            <person name="Swarbreck D."/>
            <person name="Ashurst J.L."/>
            <person name="Taylor A."/>
            <person name="Battles J."/>
            <person name="Bird C.P."/>
            <person name="Ainscough R."/>
            <person name="Almeida J.P."/>
            <person name="Ashwell R.I.S."/>
            <person name="Ambrose K.D."/>
            <person name="Babbage A.K."/>
            <person name="Bagguley C.L."/>
            <person name="Bailey J."/>
            <person name="Banerjee R."/>
            <person name="Bates K."/>
            <person name="Beasley H."/>
            <person name="Bray-Allen S."/>
            <person name="Brown A.J."/>
            <person name="Brown J.Y."/>
            <person name="Burford D.C."/>
            <person name="Burrill W."/>
            <person name="Burton J."/>
            <person name="Cahill P."/>
            <person name="Camire D."/>
            <person name="Carter N.P."/>
            <person name="Chapman J.C."/>
            <person name="Clark S.Y."/>
            <person name="Clarke G."/>
            <person name="Clee C.M."/>
            <person name="Clegg S."/>
            <person name="Corby N."/>
            <person name="Coulson A."/>
            <person name="Dhami P."/>
            <person name="Dutta I."/>
            <person name="Dunn M."/>
            <person name="Faulkner L."/>
            <person name="Frankish A."/>
            <person name="Frankland J.A."/>
            <person name="Garner P."/>
            <person name="Garnett J."/>
            <person name="Gribble S."/>
            <person name="Griffiths C."/>
            <person name="Grocock R."/>
            <person name="Gustafson E."/>
            <person name="Hammond S."/>
            <person name="Harley J.L."/>
            <person name="Hart E."/>
            <person name="Heath P.D."/>
            <person name="Ho T.P."/>
            <person name="Hopkins B."/>
            <person name="Horne J."/>
            <person name="Howden P.J."/>
            <person name="Huckle E."/>
            <person name="Hynds C."/>
            <person name="Johnson C."/>
            <person name="Johnson D."/>
            <person name="Kana A."/>
            <person name="Kay M."/>
            <person name="Kimberley A.M."/>
            <person name="Kershaw J.K."/>
            <person name="Kokkinaki M."/>
            <person name="Laird G.K."/>
            <person name="Lawlor S."/>
            <person name="Lee H.M."/>
            <person name="Leongamornlert D.A."/>
            <person name="Laird G."/>
            <person name="Lloyd C."/>
            <person name="Lloyd D.M."/>
            <person name="Loveland J."/>
            <person name="Lovell J."/>
            <person name="McLaren S."/>
            <person name="McLay K.E."/>
            <person name="McMurray A."/>
            <person name="Mashreghi-Mohammadi M."/>
            <person name="Matthews L."/>
            <person name="Milne S."/>
            <person name="Nickerson T."/>
            <person name="Nguyen M."/>
            <person name="Overton-Larty E."/>
            <person name="Palmer S.A."/>
            <person name="Pearce A.V."/>
            <person name="Peck A.I."/>
            <person name="Pelan S."/>
            <person name="Phillimore B."/>
            <person name="Porter K."/>
            <person name="Rice C.M."/>
            <person name="Rogosin A."/>
            <person name="Ross M.T."/>
            <person name="Sarafidou T."/>
            <person name="Sehra H.K."/>
            <person name="Shownkeen R."/>
            <person name="Skuce C.D."/>
            <person name="Smith M."/>
            <person name="Standring L."/>
            <person name="Sycamore N."/>
            <person name="Tester J."/>
            <person name="Thorpe A."/>
            <person name="Torcasso W."/>
            <person name="Tracey A."/>
            <person name="Tromans A."/>
            <person name="Tsolas J."/>
            <person name="Wall M."/>
            <person name="Walsh J."/>
            <person name="Wang H."/>
            <person name="Weinstock K."/>
            <person name="West A.P."/>
            <person name="Willey D.L."/>
            <person name="Whitehead S.L."/>
            <person name="Wilming L."/>
            <person name="Wray P.W."/>
            <person name="Young L."/>
            <person name="Chen Y."/>
            <person name="Lovering R.C."/>
            <person name="Moschonas N.K."/>
            <person name="Siebert R."/>
            <person name="Fechtel K."/>
            <person name="Bentley D."/>
            <person name="Durbin R.M."/>
            <person name="Hubbard T."/>
            <person name="Doucette-Stamm L."/>
            <person name="Beck S."/>
            <person name="Smith D.R."/>
            <person name="Rogers J."/>
        </authorList>
    </citation>
    <scope>NUCLEOTIDE SEQUENCE [LARGE SCALE GENOMIC DNA]</scope>
</reference>
<reference key="7">
    <citation type="submission" date="2005-07" db="EMBL/GenBank/DDBJ databases">
        <authorList>
            <person name="Mural R.J."/>
            <person name="Istrail S."/>
            <person name="Sutton G.G."/>
            <person name="Florea L."/>
            <person name="Halpern A.L."/>
            <person name="Mobarry C.M."/>
            <person name="Lippert R."/>
            <person name="Walenz B."/>
            <person name="Shatkay H."/>
            <person name="Dew I."/>
            <person name="Miller J.R."/>
            <person name="Flanigan M.J."/>
            <person name="Edwards N.J."/>
            <person name="Bolanos R."/>
            <person name="Fasulo D."/>
            <person name="Halldorsson B.V."/>
            <person name="Hannenhalli S."/>
            <person name="Turner R."/>
            <person name="Yooseph S."/>
            <person name="Lu F."/>
            <person name="Nusskern D.R."/>
            <person name="Shue B.C."/>
            <person name="Zheng X.H."/>
            <person name="Zhong F."/>
            <person name="Delcher A.L."/>
            <person name="Huson D.H."/>
            <person name="Kravitz S.A."/>
            <person name="Mouchard L."/>
            <person name="Reinert K."/>
            <person name="Remington K.A."/>
            <person name="Clark A.G."/>
            <person name="Waterman M.S."/>
            <person name="Eichler E.E."/>
            <person name="Adams M.D."/>
            <person name="Hunkapiller M.W."/>
            <person name="Myers E.W."/>
            <person name="Venter J.C."/>
        </authorList>
    </citation>
    <scope>NUCLEOTIDE SEQUENCE [LARGE SCALE GENOMIC DNA]</scope>
</reference>
<reference key="8">
    <citation type="journal article" date="2004" name="Genome Res.">
        <title>The status, quality, and expansion of the NIH full-length cDNA project: the Mammalian Gene Collection (MGC).</title>
        <authorList>
            <consortium name="The MGC Project Team"/>
        </authorList>
    </citation>
    <scope>NUCLEOTIDE SEQUENCE [LARGE SCALE MRNA] (ISOFORM 1)</scope>
    <source>
        <tissue>Skin</tissue>
    </source>
</reference>
<reference key="9">
    <citation type="journal article" date="1988" name="Cell">
        <title>Activation of cdc2 protein kinase during mitosis in human cells: cell cycle-dependent phosphorylation and subunit rearrangement.</title>
        <authorList>
            <person name="Draetta G."/>
            <person name="Beach D."/>
        </authorList>
    </citation>
    <scope>ASSOCIATION WITH P13</scope>
</reference>
<reference key="10">
    <citation type="journal article" date="1990" name="Cell">
        <title>Mutations of phosphorylation sites in lamin A that prevent nuclear lamina disassembly in mitosis.</title>
        <authorList>
            <person name="Heald R."/>
            <person name="McKeon F."/>
        </authorList>
    </citation>
    <scope>FUNCTION</scope>
    <scope>CATALYTIC ACTIVITY</scope>
    <scope>IDENTIFICATION IN THE MPF COMPLEX</scope>
</reference>
<reference key="11">
    <citation type="journal article" date="1990" name="Cell">
        <title>Identification of cell cycle-regulated phosphorylation sites on nuclear lamin C.</title>
        <authorList>
            <person name="Ward G.E."/>
            <person name="Kirschner M.W."/>
        </authorList>
    </citation>
    <scope>FUNCTION</scope>
    <scope>CATALYTIC ACTIVITY</scope>
    <scope>IDENTIFICATION IN THE MPF COMPLEX</scope>
</reference>
<reference key="12">
    <citation type="journal article" date="1995" name="Science">
        <title>Myt1: a membrane-associated inhibitory kinase that phosphorylates Cdc2 on both threonine-14 and tyrosine-15.</title>
        <authorList>
            <person name="Mueller P.R."/>
            <person name="Coleman T.R."/>
            <person name="Kumagai A."/>
            <person name="Dunphy W.G."/>
        </authorList>
    </citation>
    <scope>ACTIVITY REGULATION</scope>
    <scope>PHOSPHORYLATION AT THR-14 AND TYR-15 BY PKMYT1</scope>
</reference>
<reference key="13">
    <citation type="journal article" date="1997" name="Blood">
        <title>The Fanconi anemia polypeptide, FAC, binds to the cyclin-dependent kinase, cdc2.</title>
        <authorList>
            <person name="Kupfer G.M."/>
            <person name="Yamashita T."/>
            <person name="Naf D."/>
            <person name="Suliman A."/>
            <person name="Asano S."/>
            <person name="D'Andrea A.D."/>
        </authorList>
    </citation>
    <scope>INTERACTION WITH FANCC</scope>
</reference>
<reference key="14">
    <citation type="journal article" date="1997" name="Eur. J. Biochem.">
        <title>Biochemical and cellular effects of roscovitine, a potent and selective inhibitor of the cyclin-dependent kinases cdc2, cdk2 and cdk5.</title>
        <authorList>
            <person name="Meijer L."/>
            <person name="Borgne A."/>
            <person name="Mulner O."/>
            <person name="Chong J.P.J."/>
            <person name="Blow J.J."/>
            <person name="Inagaki N."/>
            <person name="Inagaki M."/>
            <person name="Delcros J.-G."/>
            <person name="Moulinoux J.-P."/>
        </authorList>
    </citation>
    <scope>ACTIVITY REGULATION BY ROSCOVITINE AND OLOMOUCINE</scope>
</reference>
<reference key="15">
    <citation type="journal article" date="2003" name="J. Biol. Chem.">
        <title>RLIP, an effector of the Ral GTPases, is a platform for Cdk1 to phosphorylate epsin during the switch off of endocytosis in mitosis.</title>
        <authorList>
            <person name="Rosse C."/>
            <person name="L'Hoste S."/>
            <person name="Offner N."/>
            <person name="Picard A."/>
            <person name="Camonis J."/>
        </authorList>
    </citation>
    <scope>INTERACTION WITH RALBP1</scope>
</reference>
<reference key="16">
    <citation type="journal article" date="2003" name="Nature">
        <title>Proteomic characterization of the human centrosome by protein correlation profiling.</title>
        <authorList>
            <person name="Andersen J.S."/>
            <person name="Wilkinson C.J."/>
            <person name="Mayor T."/>
            <person name="Mortensen P."/>
            <person name="Nigg E.A."/>
            <person name="Mann M."/>
        </authorList>
    </citation>
    <scope>IDENTIFICATION BY MASS SPECTROMETRY</scope>
    <scope>SUBCELLULAR LOCATION [LARGE SCALE ANALYSIS]</scope>
    <source>
        <tissue>Lymphoblast</tissue>
    </source>
</reference>
<reference key="17">
    <citation type="journal article" date="2004" name="J. Biol. Chem.">
        <title>Fbx7 functions in the SCF complex regulating Cdk1-cyclin B-phosphorylated hepatoma up-regulated protein (HURP) proteolysis by a proline-rich region.</title>
        <authorList>
            <person name="Hsu J.-M."/>
            <person name="Lee Y.-C.G."/>
            <person name="Yu C.-T.R."/>
            <person name="Huang C.-Y.F."/>
        </authorList>
    </citation>
    <scope>INTERACTION WITH DLGAP5</scope>
</reference>
<reference key="18">
    <citation type="journal article" date="2006" name="J. Biol. Chem.">
        <title>Cell cycle-dependent phosphorylation of the RUNX2 transcription factor by cdc2 regulates endothelial cell proliferation.</title>
        <authorList>
            <person name="Qiao M."/>
            <person name="Shapiro P."/>
            <person name="Fosbrink M."/>
            <person name="Rus H."/>
            <person name="Kumar R."/>
            <person name="Passaniti A."/>
        </authorList>
    </citation>
    <scope>FUNCTION AS RUNX2 KINASE</scope>
</reference>
<reference key="19">
    <citation type="journal article" date="2006" name="Mol. Biol. Cell">
        <title>Microtubule regulation in mitosis: tubulin phosphorylation by the cyclin-dependent kinase Cdk1.</title>
        <authorList>
            <person name="Fourest-Lieuvin A."/>
            <person name="Peris L."/>
            <person name="Gache V."/>
            <person name="Garcia-Saez I."/>
            <person name="Juillan-Binard C."/>
            <person name="Lantez V."/>
            <person name="Job D."/>
        </authorList>
    </citation>
    <scope>FUNCTION AS BETA-TUBULINS KINASE</scope>
</reference>
<reference key="20">
    <citation type="journal article" date="2007" name="Cancer Res.">
        <title>Cks1 regulates cdk1 expression: a novel role during mitotic entry in breast cancer cells.</title>
        <authorList>
            <person name="Westbrook L."/>
            <person name="Manuvakhova M."/>
            <person name="Kern F.G."/>
            <person name="Estes N.R. II"/>
            <person name="Ramanathan H.N."/>
            <person name="Thottassery J.V."/>
        </authorList>
    </citation>
    <scope>INDUCTION BY CKS1B</scope>
</reference>
<reference key="21">
    <citation type="journal article" date="2007" name="Cytokine">
        <title>TGFbeta regulates the expression and activities of G2 checkpoint kinases in human myeloid leukemia cells.</title>
        <authorList>
            <person name="Hu X."/>
            <person name="Cui D."/>
            <person name="Moscinski L.C."/>
            <person name="Zhang X."/>
            <person name="Maccachero V."/>
            <person name="Zuckerman K.S."/>
        </authorList>
    </citation>
    <scope>FUNCTION AS RB1 KINASE</scope>
    <scope>ACTIVITY REGULATION BY TGFB1</scope>
    <scope>REPRESSION BY TGFB1</scope>
</reference>
<reference key="22">
    <citation type="journal article" date="2007" name="Neurochem. Res.">
        <title>Microtubule deacetylases, SirT2 and HDAC6, in the nervous system.</title>
        <authorList>
            <person name="Southwood C.M."/>
            <person name="Peppi M."/>
            <person name="Dryden S."/>
            <person name="Tainsky M.A."/>
            <person name="Gow A."/>
        </authorList>
    </citation>
    <scope>FUNCTION AS SIRT2 KINASE</scope>
    <scope>SUBCELLULAR LOCATION</scope>
</reference>
<reference key="23">
    <citation type="journal article" date="2008" name="J. Proteome Res.">
        <title>Combining protein-based IMAC, peptide-based IMAC, and MudPIT for efficient phosphoproteomic analysis.</title>
        <authorList>
            <person name="Cantin G.T."/>
            <person name="Yi W."/>
            <person name="Lu B."/>
            <person name="Park S.K."/>
            <person name="Xu T."/>
            <person name="Lee J.-D."/>
            <person name="Yates J.R. III"/>
        </authorList>
    </citation>
    <scope>IDENTIFICATION BY MASS SPECTROMETRY [LARGE SCALE ANALYSIS]</scope>
    <source>
        <tissue>Cervix carcinoma</tissue>
    </source>
</reference>
<reference key="24">
    <citation type="journal article" date="2008" name="Mol. Biol. Cell">
        <title>Rapid cycling and precocious termination of G1 phase in cells expressing CDK1AF.</title>
        <authorList>
            <person name="Pomerening J.R."/>
            <person name="Ubersax J.A."/>
            <person name="Ferrell J.E. Jr."/>
        </authorList>
    </citation>
    <scope>FUNCTION DURING THE M PHASE</scope>
    <scope>MUTAGENESIS OF 14-THR-TYR-15</scope>
</reference>
<reference key="25">
    <citation type="journal article" date="2008" name="Mol. Cell">
        <title>Kinase-selective enrichment enables quantitative phosphoproteomics of the kinome across the cell cycle.</title>
        <authorList>
            <person name="Daub H."/>
            <person name="Olsen J.V."/>
            <person name="Bairlein M."/>
            <person name="Gnad F."/>
            <person name="Oppermann F.S."/>
            <person name="Korner R."/>
            <person name="Greff Z."/>
            <person name="Keri G."/>
            <person name="Stemmann O."/>
            <person name="Mann M."/>
        </authorList>
    </citation>
    <scope>PHOSPHORYLATION [LARGE SCALE ANALYSIS] AT TYR-19; SER-39; TYR-77 AND THR-222</scope>
    <scope>IDENTIFICATION BY MASS SPECTROMETRY [LARGE SCALE ANALYSIS]</scope>
    <source>
        <tissue>Cervix carcinoma</tissue>
    </source>
</reference>
<reference key="26">
    <citation type="journal article" date="2008" name="Proc. Natl. Acad. Sci. U.S.A.">
        <title>A quantitative atlas of mitotic phosphorylation.</title>
        <authorList>
            <person name="Dephoure N."/>
            <person name="Zhou C."/>
            <person name="Villen J."/>
            <person name="Beausoleil S.A."/>
            <person name="Bakalarski C.E."/>
            <person name="Elledge S.J."/>
            <person name="Gygi S.P."/>
        </authorList>
    </citation>
    <scope>PHOSPHORYLATION [LARGE SCALE ANALYSIS] AT THR-14 AND TYR-15</scope>
    <scope>IDENTIFICATION BY MASS SPECTROMETRY [LARGE SCALE ANALYSIS]</scope>
    <source>
        <tissue>Cervix carcinoma</tissue>
    </source>
</reference>
<reference key="27">
    <citation type="journal article" date="2008" name="Science">
        <title>Activation of FOXO1 by Cdk1 in cycling cells and postmitotic neurons.</title>
        <authorList>
            <person name="Yuan Z."/>
            <person name="Becker E.B.E."/>
            <person name="Merlo P."/>
            <person name="Yamada T."/>
            <person name="DiBacco S."/>
            <person name="Konishi Y."/>
            <person name="Schaefer E.M."/>
            <person name="Bonni A."/>
        </authorList>
    </citation>
    <scope>FUNCTION AS FOXO1 KINASE</scope>
</reference>
<reference key="28">
    <citation type="journal article" date="2009" name="J. Biol. Chem.">
        <title>Human CtIP mediates cell cycle control of DNA end resection and double strand break repair.</title>
        <authorList>
            <person name="Huertas P."/>
            <person name="Jackson S.P."/>
        </authorList>
    </citation>
    <scope>FUNCTION</scope>
    <scope>CATALYTIC ACTIVITY</scope>
</reference>
<reference key="29">
    <citation type="journal article" date="2009" name="J. Cell Sci.">
        <title>Sequential phosphorylation of Nedd1 by Cdk1 and Plk1 is required for targeting of the gammaTuRC to the centrosome.</title>
        <authorList>
            <person name="Zhang X."/>
            <person name="Chen Q."/>
            <person name="Feng J."/>
            <person name="Hou J."/>
            <person name="Yang F."/>
            <person name="Liu J."/>
            <person name="Jiang Q."/>
            <person name="Zhang C."/>
        </authorList>
    </citation>
    <scope>FUNCTION AS NEDD1 KINASE</scope>
</reference>
<reference key="30">
    <citation type="journal article" date="2009" name="Mol. Cell. Proteomics">
        <title>Large-scale proteomics analysis of the human kinome.</title>
        <authorList>
            <person name="Oppermann F.S."/>
            <person name="Gnad F."/>
            <person name="Olsen J.V."/>
            <person name="Hornberger R."/>
            <person name="Greff Z."/>
            <person name="Keri G."/>
            <person name="Mann M."/>
            <person name="Daub H."/>
        </authorList>
    </citation>
    <scope>ACETYLATION [LARGE SCALE ANALYSIS] AT MET-1</scope>
    <scope>PHOSPHORYLATION [LARGE SCALE ANALYSIS] AT TYR-19; SER-39; SER-178; THR-222 AND SER-248</scope>
    <scope>IDENTIFICATION BY MASS SPECTROMETRY [LARGE SCALE ANALYSIS]</scope>
</reference>
<reference key="31">
    <citation type="journal article" date="2009" name="Sci. Signal.">
        <title>Quantitative phosphoproteomic analysis of T cell receptor signaling reveals system-wide modulation of protein-protein interactions.</title>
        <authorList>
            <person name="Mayya V."/>
            <person name="Lundgren D.H."/>
            <person name="Hwang S.-I."/>
            <person name="Rezaul K."/>
            <person name="Wu L."/>
            <person name="Eng J.K."/>
            <person name="Rodionov V."/>
            <person name="Han D.K."/>
        </authorList>
    </citation>
    <scope>PHOSPHORYLATION [LARGE SCALE ANALYSIS] AT THR-14; TYR-15 AND THR-161</scope>
    <scope>IDENTIFICATION BY MASS SPECTROMETRY [LARGE SCALE ANALYSIS]</scope>
    <source>
        <tissue>Leukemic T-cell</tissue>
    </source>
</reference>
<reference key="32">
    <citation type="journal article" date="2009" name="Science">
        <title>Lysine acetylation targets protein complexes and co-regulates major cellular functions.</title>
        <authorList>
            <person name="Choudhary C."/>
            <person name="Kumar C."/>
            <person name="Gnad F."/>
            <person name="Nielsen M.L."/>
            <person name="Rehman M."/>
            <person name="Walther T.C."/>
            <person name="Olsen J.V."/>
            <person name="Mann M."/>
        </authorList>
    </citation>
    <scope>ACETYLATION [LARGE SCALE ANALYSIS] AT LYS-6</scope>
    <scope>IDENTIFICATION BY MASS SPECTROMETRY [LARGE SCALE ANALYSIS]</scope>
</reference>
<reference key="33">
    <citation type="journal article" date="2010" name="Biochem. Biophys. Res. Commun.">
        <title>Mitotic phosphorylation of Aki1 at Ser208 by cyclin B1-Cdk1 complex.</title>
        <authorList>
            <person name="Nakamura A."/>
            <person name="Naito M."/>
            <person name="Arai H."/>
            <person name="Fujita N."/>
        </authorList>
    </citation>
    <scope>FUNCTION AS CC2D1A KINASE</scope>
</reference>
<reference key="34">
    <citation type="journal article" date="2010" name="EMBO Rep.">
        <title>New Cdc2 Tyr 4 phosphorylation by dsRNA-activated protein kinase triggers Cdc2 polyubiquitination and G2 arrest under genotoxic stresses.</title>
        <authorList>
            <person name="Yoon C.-H."/>
            <person name="Miah M.A."/>
            <person name="Kim K.P."/>
            <person name="Bae Y.-S."/>
        </authorList>
    </citation>
    <scope>FUNCTION IN G2 ARREST UPON DNA DAMAGE</scope>
    <scope>PHOSPHORYLATION AT TYR-4 BY PKR/EIF2AK2</scope>
    <scope>POLYUBIQUITINATION</scope>
    <scope>MUTAGENESIS OF TYR-4</scope>
</reference>
<reference key="35">
    <citation type="journal article" date="2010" name="J. Biol. Chem.">
        <title>The protein kinase Cdelta catalytic fragment is critical for maintenance of the G2/M DNA damage checkpoint.</title>
        <authorList>
            <person name="LaGory E.L."/>
            <person name="Sitailo L.A."/>
            <person name="Denning M.F."/>
        </authorList>
    </citation>
    <scope>PHOSPHORYLATION AT TYR-15</scope>
</reference>
<reference key="36">
    <citation type="journal article" date="2010" name="J. Biol. Chem.">
        <title>Cdc25 phosphatases are required for timely assembly of CDK1-cyclin B at the G2/M transition.</title>
        <authorList>
            <person name="Timofeev O."/>
            <person name="Cizmecioglu O."/>
            <person name="Settele F."/>
            <person name="Kempf T."/>
            <person name="Hoffmann I."/>
        </authorList>
    </citation>
    <scope>FUNCTION IN G2-M TRANSITION</scope>
    <scope>ACTIVITY REGULATION</scope>
    <scope>DEPHOSPHORYLATION AT THR-14 AND TYR-15 BY CDC25</scope>
    <scope>PHOSPHORYLATION AT THR-161 BY CDK7/CAK</scope>
    <scope>INTERACTION WITH B-CYCLIN</scope>
</reference>
<reference key="37">
    <citation type="journal article" date="2010" name="Mol. Cell. Biol.">
        <title>Cyclin-dependent kinase 1-mediated Bcl-xL/Bcl-2 phosphorylation acts as a functional link coupling mitotic arrest and apoptosis.</title>
        <authorList>
            <person name="Terrano D.T."/>
            <person name="Upreti M."/>
            <person name="Chambers T.C."/>
        </authorList>
    </citation>
    <scope>FUNCTION AS BCL-XL/BCL2L1 KINASE</scope>
    <scope>SUBCELLULAR LOCATION</scope>
</reference>
<reference key="38">
    <citation type="journal article" date="2010" name="Mol. Cell. Biol.">
        <title>Cdk1/cyclin B1 controls Fas-mediated apoptosis by regulating caspase-8 activity.</title>
        <authorList>
            <person name="Matthess Y."/>
            <person name="Raab M."/>
            <person name="Sanhaji M."/>
            <person name="Lavrik I.N."/>
            <person name="Strebhardt K."/>
        </authorList>
    </citation>
    <scope>FUNCTION AS CASP8 KINASE</scope>
</reference>
<reference key="39">
    <citation type="journal article" date="2010" name="Nat. Cell Biol.">
        <title>Cyclin-dependent kinases regulate epigenetic gene silencing through phosphorylation of EZH2.</title>
        <authorList>
            <person name="Chen S."/>
            <person name="Bohrer L.R."/>
            <person name="Rai A.N."/>
            <person name="Pan Y."/>
            <person name="Gan L."/>
            <person name="Zhou X."/>
            <person name="Bagchi A."/>
            <person name="Simon J.A."/>
            <person name="Huang H."/>
        </authorList>
    </citation>
    <scope>FUNCTION AS EZH2 KINASE</scope>
</reference>
<reference key="40">
    <citation type="journal article" date="2010" name="Sci. Signal.">
        <title>Quantitative phosphoproteomics reveals widespread full phosphorylation site occupancy during mitosis.</title>
        <authorList>
            <person name="Olsen J.V."/>
            <person name="Vermeulen M."/>
            <person name="Santamaria A."/>
            <person name="Kumar C."/>
            <person name="Miller M.L."/>
            <person name="Jensen L.J."/>
            <person name="Gnad F."/>
            <person name="Cox J."/>
            <person name="Jensen T.S."/>
            <person name="Nigg E.A."/>
            <person name="Brunak S."/>
            <person name="Mann M."/>
        </authorList>
    </citation>
    <scope>PHOSPHORYLATION [LARGE SCALE ANALYSIS] AT THR-161</scope>
    <scope>IDENTIFICATION BY MASS SPECTROMETRY [LARGE SCALE ANALYSIS]</scope>
    <source>
        <tissue>Cervix carcinoma</tissue>
    </source>
</reference>
<reference key="41">
    <citation type="journal article" date="2011" name="BMC Syst. Biol.">
        <title>Initial characterization of the human central proteome.</title>
        <authorList>
            <person name="Burkard T.R."/>
            <person name="Planyavsky M."/>
            <person name="Kaupe I."/>
            <person name="Breitwieser F.P."/>
            <person name="Buerckstuemmer T."/>
            <person name="Bennett K.L."/>
            <person name="Superti-Furga G."/>
            <person name="Colinge J."/>
        </authorList>
    </citation>
    <scope>IDENTIFICATION BY MASS SPECTROMETRY [LARGE SCALE ANALYSIS]</scope>
</reference>
<reference key="42">
    <citation type="journal article" date="2011" name="Cancer Res.">
        <title>Cep63 recruits Cdk1 to the centrosome: implications for regulation of mitotic entry, centrosome amplification, and genome maintenance.</title>
        <authorList>
            <person name="Loffler H."/>
            <person name="Fechter A."/>
            <person name="Matuszewska M."/>
            <person name="Saffrich R."/>
            <person name="Mistrik M."/>
            <person name="Marhold J."/>
            <person name="Hornung C."/>
            <person name="Westermann F."/>
            <person name="Bartek J."/>
            <person name="Kramer A."/>
        </authorList>
    </citation>
    <scope>INTERACTION WITH CEP63</scope>
    <scope>SUBCELLULAR LOCATION</scope>
</reference>
<reference key="43">
    <citation type="journal article" date="2011" name="EMBO J.">
        <title>CAMP (C13orf8, ZNF828) is a novel regulator of kinetochore-microtubule attachment.</title>
        <authorList>
            <person name="Itoh G."/>
            <person name="Kanno S."/>
            <person name="Uchida K.S."/>
            <person name="Chiba S."/>
            <person name="Sugino S."/>
            <person name="Watanabe K."/>
            <person name="Mizuno K."/>
            <person name="Yasui A."/>
            <person name="Hirota T."/>
            <person name="Tanaka K."/>
        </authorList>
    </citation>
    <scope>FUNCTION AS CHAMP1 KINASE</scope>
</reference>
<reference key="44">
    <citation type="journal article" date="2005" name="Trends Biochem. Sci.">
        <title>Mammalian cyclin-dependent kinases.</title>
        <authorList>
            <person name="Malumbres M."/>
            <person name="Barbacid M."/>
        </authorList>
    </citation>
    <scope>REVIEW ON SUBSTRATES</scope>
    <scope>GENE FAMILY</scope>
</reference>
<reference key="45">
    <citation type="journal article" date="2009" name="J. Cell Biol.">
        <title>The decision to enter mitosis: feedback and redundancy in the mitotic entry network.</title>
        <authorList>
            <person name="Lindqvist A."/>
            <person name="Rodriguez-Bravo V."/>
            <person name="Medema R.H."/>
        </authorList>
    </citation>
    <scope>REVIEW ON SUBCELLULAR TRANSLOCATION</scope>
</reference>
<reference key="46">
    <citation type="journal article" date="2009" name="Nat. Rev. Cancer">
        <title>Cell cycle, CDKs and cancer: a changing paradigm.</title>
        <authorList>
            <person name="Malumbres M."/>
            <person name="Barbacid M."/>
        </authorList>
    </citation>
    <scope>REVIEW ON CELL CYCLE CONTROL AND INHIBITORS</scope>
    <scope>GENE FAMILY</scope>
</reference>
<reference key="47">
    <citation type="journal article" date="2011" name="Cell Prolif.">
        <title>Cdc2: a monopotent or pluripotent CDK?</title>
        <authorList>
            <person name="Hu X."/>
            <person name="Moscinski L.C."/>
        </authorList>
    </citation>
    <scope>REVIEW ON CELL CYCLE CONTROL</scope>
</reference>
<reference key="48">
    <citation type="journal article" date="2011" name="Curr. Med. Chem.">
        <title>Cyclin dependent kinase 1 inhibitors: a review of recent progress.</title>
        <authorList>
            <person name="Wang Q."/>
            <person name="Su L."/>
            <person name="Liu N."/>
            <person name="Zhang L."/>
            <person name="Xu W."/>
            <person name="Fang H."/>
        </authorList>
    </citation>
    <scope>REVIEW ON CELL CYCLE CONTROL AND INHIBITORS</scope>
</reference>
<reference key="49">
    <citation type="journal article" date="2011" name="F1000 Biol. Rep.">
        <title>Checkpoint recovery in cells: how a molecular understanding can help in the fight against cancer.</title>
        <authorList>
            <person name="Medema R.H."/>
            <person name="Macurek L."/>
        </authorList>
    </citation>
    <scope>REVIEW ON CELL CYCLE CONTROL</scope>
</reference>
<reference key="50">
    <citation type="journal article" date="2011" name="Nat. Med.">
        <title>EGFR and EphA2 are host factors for hepatitis C virus entry and possible targets for antiviral therapy.</title>
        <authorList>
            <person name="Lupberger J."/>
            <person name="Zeisel M.B."/>
            <person name="Xiao F."/>
            <person name="Thumann C."/>
            <person name="Fofana I."/>
            <person name="Zona L."/>
            <person name="Davis C."/>
            <person name="Mee C.J."/>
            <person name="Turek M."/>
            <person name="Gorke S."/>
            <person name="Royer C."/>
            <person name="Fischer B."/>
            <person name="Zahid M.N."/>
            <person name="Lavillette D."/>
            <person name="Fresquet J."/>
            <person name="Cosset F.L."/>
            <person name="Rothenberg S.M."/>
            <person name="Pietschmann T."/>
            <person name="Patel A.H."/>
            <person name="Pessaux P."/>
            <person name="Doffoel M."/>
            <person name="Raffelsberger W."/>
            <person name="Poch O."/>
            <person name="McKeating J.A."/>
            <person name="Brino L."/>
            <person name="Baumert T.F."/>
        </authorList>
    </citation>
    <scope>FUNCTION (MICROBIAL INFECTION)</scope>
</reference>
<reference key="51">
    <citation type="journal article" date="2011" name="Sci. Signal.">
        <title>System-wide temporal characterization of the proteome and phosphoproteome of human embryonic stem cell differentiation.</title>
        <authorList>
            <person name="Rigbolt K.T."/>
            <person name="Prokhorova T.A."/>
            <person name="Akimov V."/>
            <person name="Henningsen J."/>
            <person name="Johansen P.T."/>
            <person name="Kratchmarova I."/>
            <person name="Kassem M."/>
            <person name="Mann M."/>
            <person name="Olsen J.V."/>
            <person name="Blagoev B."/>
        </authorList>
    </citation>
    <scope>PHOSPHORYLATION [LARGE SCALE ANALYSIS] AT THR-161</scope>
    <scope>IDENTIFICATION BY MASS SPECTROMETRY [LARGE SCALE ANALYSIS]</scope>
</reference>
<reference key="52">
    <citation type="journal article" date="2012" name="Proc. Natl. Acad. Sci. U.S.A.">
        <title>N-terminal acetylome analyses and functional insights of the N-terminal acetyltransferase NatB.</title>
        <authorList>
            <person name="Van Damme P."/>
            <person name="Lasa M."/>
            <person name="Polevoda B."/>
            <person name="Gazquez C."/>
            <person name="Elosegui-Artola A."/>
            <person name="Kim D.S."/>
            <person name="De Juan-Pardo E."/>
            <person name="Demeyer K."/>
            <person name="Hole K."/>
            <person name="Larrea E."/>
            <person name="Timmerman E."/>
            <person name="Prieto J."/>
            <person name="Arnesen T."/>
            <person name="Sherman F."/>
            <person name="Gevaert K."/>
            <person name="Aldabe R."/>
        </authorList>
    </citation>
    <scope>ACETYLATION [LARGE SCALE ANALYSIS] AT MET-1</scope>
    <scope>IDENTIFICATION BY MASS SPECTROMETRY [LARGE SCALE ANALYSIS]</scope>
</reference>
<reference key="53">
    <citation type="journal article" date="2013" name="Cell Rep.">
        <title>Phosphorylation of SAMHD1 by cyclin A2/CDK1 regulates its restriction activity toward HIV-1.</title>
        <authorList>
            <person name="Cribier A."/>
            <person name="Descours B."/>
            <person name="Valadao A.L."/>
            <person name="Laguette N."/>
            <person name="Benkirane M."/>
        </authorList>
    </citation>
    <scope>FUNCTION</scope>
</reference>
<reference key="54">
    <citation type="journal article" date="2013" name="Cell Host Microbe">
        <title>The retroviral restriction ability of SAMHD1, but not its deoxynucleotide triphosphohydrolase activity, is regulated by phosphorylation.</title>
        <authorList>
            <person name="White T.E."/>
            <person name="Brandariz-Nunez A."/>
            <person name="Valle-Casuso J.C."/>
            <person name="Amie S."/>
            <person name="Nguyen L.A."/>
            <person name="Kim B."/>
            <person name="Tuzova M."/>
            <person name="Diaz-Griffero F."/>
        </authorList>
    </citation>
    <scope>FUNCTION</scope>
</reference>
<reference key="55">
    <citation type="journal article" date="2013" name="J. Biol. Chem.">
        <title>Tubulin polymerization promoting protein 1 (Tppp1) phosphorylation by Rho-associated coiled-coil kinase (rock) and cyclin-dependent kinase 1 (Cdk1) inhibits microtubule dynamics to increase cell proliferation.</title>
        <authorList>
            <person name="Schofield A.V."/>
            <person name="Gamell C."/>
            <person name="Suryadinata R."/>
            <person name="Sarcevic B."/>
            <person name="Bernard O."/>
        </authorList>
    </citation>
    <scope>FUNCTION</scope>
    <scope>CATALYTIC ACTIVITY</scope>
</reference>
<reference key="56">
    <citation type="journal article" date="2013" name="J. Proteome Res.">
        <title>Toward a comprehensive characterization of a human cancer cell phosphoproteome.</title>
        <authorList>
            <person name="Zhou H."/>
            <person name="Di Palma S."/>
            <person name="Preisinger C."/>
            <person name="Peng M."/>
            <person name="Polat A.N."/>
            <person name="Heck A.J."/>
            <person name="Mohammed S."/>
        </authorList>
    </citation>
    <scope>PHOSPHORYLATION [LARGE SCALE ANALYSIS] AT SER-39; THR-141 AND THR-161</scope>
    <scope>IDENTIFICATION BY MASS SPECTROMETRY [LARGE SCALE ANALYSIS]</scope>
    <source>
        <tissue>Cervix carcinoma</tissue>
        <tissue>Erythroleukemia</tissue>
    </source>
</reference>
<reference key="57">
    <citation type="journal article" date="2014" name="J. Biol. Chem.">
        <title>Ki67 antigen contributes to the timely accumulation of protein phosphatase 1gamma on anaphase chromosomes.</title>
        <authorList>
            <person name="Takagi M."/>
            <person name="Nishiyama Y."/>
            <person name="Taguchi A."/>
            <person name="Imamoto N."/>
        </authorList>
    </citation>
    <scope>FUNCTION</scope>
</reference>
<reference key="58">
    <citation type="journal article" date="2015" name="Biochem. Biophys. Res. Commun.">
        <title>Phosphorylation of the centrosomal protein, Cep169, by Cdk1 promotes its dissociation from centrosomes in mitosis.</title>
        <authorList>
            <person name="Mori Y."/>
            <person name="Inoue Y."/>
            <person name="Taniyama Y."/>
            <person name="Tanaka S."/>
            <person name="Terada Y."/>
        </authorList>
    </citation>
    <scope>FUNCTION</scope>
</reference>
<reference key="59">
    <citation type="journal article" date="2015" name="Dev. Cell">
        <title>Dynamic phosphorylation of CENP-A at Ser68 orchestrates its cell-cycle-dependent deposition at centromeres.</title>
        <authorList>
            <person name="Yu Z."/>
            <person name="Zhou X."/>
            <person name="Wang W."/>
            <person name="Deng W."/>
            <person name="Fang J."/>
            <person name="Hu H."/>
            <person name="Wang Z."/>
            <person name="Li S."/>
            <person name="Cui L."/>
            <person name="Shen J."/>
            <person name="Zhai L."/>
            <person name="Peng S."/>
            <person name="Wong J."/>
            <person name="Dong S."/>
            <person name="Yuan Z."/>
            <person name="Ou G."/>
            <person name="Zhang X."/>
            <person name="Xu P."/>
            <person name="Lou J."/>
            <person name="Yang N."/>
            <person name="Chen P."/>
            <person name="Xu R.M."/>
            <person name="Li G."/>
        </authorList>
    </citation>
    <scope>FUNCTION</scope>
    <scope>INTERACTION WITH CENPA</scope>
</reference>
<reference key="60">
    <citation type="journal article" date="2015" name="Proteomics">
        <title>N-terminome analysis of the human mitochondrial proteome.</title>
        <authorList>
            <person name="Vaca Jacome A.S."/>
            <person name="Rabilloud T."/>
            <person name="Schaeffer-Reiss C."/>
            <person name="Rompais M."/>
            <person name="Ayoub D."/>
            <person name="Lane L."/>
            <person name="Bairoch A."/>
            <person name="Van Dorsselaer A."/>
            <person name="Carapito C."/>
        </authorList>
    </citation>
    <scope>IDENTIFICATION BY MASS SPECTROMETRY [LARGE SCALE ANALYSIS]</scope>
</reference>
<reference key="61">
    <citation type="journal article" date="2016" name="Cell">
        <title>Circadian amplitude regulation via FBXW7-targeted REV-ERBalpha degradation.</title>
        <authorList>
            <person name="Zhao X."/>
            <person name="Hirota T."/>
            <person name="Han X."/>
            <person name="Cho H."/>
            <person name="Chong L.W."/>
            <person name="Lamia K."/>
            <person name="Liu S."/>
            <person name="Atkins A.R."/>
            <person name="Banayo E."/>
            <person name="Liddle C."/>
            <person name="Yu R.T."/>
            <person name="Yates J.R. III"/>
            <person name="Kay S.A."/>
            <person name="Downes M."/>
            <person name="Evans R.M."/>
        </authorList>
    </citation>
    <scope>FUNCTION</scope>
    <scope>INTERACTION WITH NR1D1</scope>
</reference>
<reference key="62">
    <citation type="journal article" date="2016" name="Mol. Cell">
        <title>Nbs1 converts the human Mre11/Rad50 nuclease complex into an endo/exonuclease machine specific for protein-DNA adducts.</title>
        <authorList>
            <person name="Deshpande R.A."/>
            <person name="Lee J.H."/>
            <person name="Arora S."/>
            <person name="Paull T.T."/>
        </authorList>
    </citation>
    <scope>FUNCTION</scope>
</reference>
<reference key="63">
    <citation type="journal article" date="2016" name="Nat. Chem. Biol.">
        <title>Acetylation of Aurora B by TIP60 ensures accurate chromosomal segregation.</title>
        <authorList>
            <person name="Mo F."/>
            <person name="Zhuang X."/>
            <person name="Liu X."/>
            <person name="Yao P.Y."/>
            <person name="Qin B."/>
            <person name="Su Z."/>
            <person name="Zang J."/>
            <person name="Wang Z."/>
            <person name="Zhang J."/>
            <person name="Dou Z."/>
            <person name="Tian C."/>
            <person name="Teng M."/>
            <person name="Niu L."/>
            <person name="Hill D.L."/>
            <person name="Fang G."/>
            <person name="Ding X."/>
            <person name="Fu C."/>
            <person name="Yao X."/>
        </authorList>
    </citation>
    <scope>FUNCTION</scope>
</reference>
<reference key="64">
    <citation type="journal article" date="2017" name="Curr. Biol.">
        <title>Ska3 Phosphorylated by Cdk1 Binds Ndc80 and Recruits Ska to Kinetochores to Promote Mitotic Progression.</title>
        <authorList>
            <person name="Zhang Q."/>
            <person name="Sivakumar S."/>
            <person name="Chen Y."/>
            <person name="Gao H."/>
            <person name="Yang L."/>
            <person name="Yuan Z."/>
            <person name="Yu H."/>
            <person name="Liu H."/>
        </authorList>
    </citation>
    <scope>FUNCTION</scope>
</reference>
<reference key="65">
    <citation type="journal article" date="2017" name="Nat. Struct. Mol. Biol.">
        <title>Site-specific mapping of the human SUMO proteome reveals co-modification with phosphorylation.</title>
        <authorList>
            <person name="Hendriks I.A."/>
            <person name="Lyon D."/>
            <person name="Young C."/>
            <person name="Jensen L.J."/>
            <person name="Vertegaal A.C."/>
            <person name="Nielsen M.L."/>
        </authorList>
    </citation>
    <scope>SUMOYLATION [LARGE SCALE ANALYSIS] AT LYS-6; LYS-9; LYS-20 AND LYS-139</scope>
    <scope>IDENTIFICATION BY MASS SPECTROMETRY [LARGE SCALE ANALYSIS]</scope>
</reference>
<reference key="66">
    <citation type="journal article" date="2018" name="Am. J. Hum. Genet.">
        <title>Homozygous Mutations in WEE2 Cause Fertilization Failure and Female Infertility.</title>
        <authorList>
            <person name="Sang Q."/>
            <person name="Li B."/>
            <person name="Kuang Y."/>
            <person name="Wang X."/>
            <person name="Zhang Z."/>
            <person name="Chen B."/>
            <person name="Wu L."/>
            <person name="Lyu Q."/>
            <person name="Fu Y."/>
            <person name="Yan Z."/>
            <person name="Mao X."/>
            <person name="Xu Y."/>
            <person name="Mu J."/>
            <person name="Li Q."/>
            <person name="Jin L."/>
            <person name="He L."/>
            <person name="Wang L."/>
        </authorList>
    </citation>
    <scope>PHOSPHORYLATION AT TYR-15</scope>
</reference>
<reference key="67">
    <citation type="journal article" date="2018" name="Science">
        <title>An intrinsic S/G2 checkpoint enforced by ATR.</title>
        <authorList>
            <person name="Saldivar J.C."/>
            <person name="Hamperl S."/>
            <person name="Bocek M.J."/>
            <person name="Chung M."/>
            <person name="Bass T.E."/>
            <person name="Cisneros-Soberanis F."/>
            <person name="Samejima K."/>
            <person name="Xie L."/>
            <person name="Paulson J.R."/>
            <person name="Earnshaw W.C."/>
            <person name="Cortez D."/>
            <person name="Meyer T."/>
            <person name="Cimprich K.A."/>
        </authorList>
    </citation>
    <scope>FUNCTION</scope>
    <scope>ACTIVITY REGULATION</scope>
</reference>
<reference key="68">
    <citation type="journal article" date="2019" name="Elife">
        <title>Molecular determinants of the Ska-Ndc80 interaction and their influence on microtubule tracking and force-coupling.</title>
        <authorList>
            <person name="Huis In 't Veld P.J."/>
            <person name="Volkov V.A."/>
            <person name="Stender I.D."/>
            <person name="Musacchio A."/>
            <person name="Dogterom M."/>
        </authorList>
    </citation>
    <scope>FUNCTION</scope>
</reference>
<reference key="69">
    <citation type="journal article" date="2019" name="J. Biol. Chem.">
        <title>The microtubule-associated protein EML3 regulates mitotic spindle assembly by recruiting the Augmin complex to spindle microtubules.</title>
        <authorList>
            <person name="Luo J."/>
            <person name="Yang B."/>
            <person name="Xin G."/>
            <person name="Sun M."/>
            <person name="Zhang B."/>
            <person name="Guo X."/>
            <person name="Jiang Q."/>
            <person name="Zhang C."/>
        </authorList>
    </citation>
    <scope>FUNCTION AS EML3 KINASE</scope>
</reference>
<reference key="70">
    <citation type="journal article" date="2019" name="Mol. Cell">
        <title>Pacer is a mediator of mTORC1 and GSK3-TIP60 signaling in regulation of autophagosome maturation and lipid metabolism.</title>
        <authorList>
            <person name="Cheng X."/>
            <person name="Ma X."/>
            <person name="Zhu Q."/>
            <person name="Song D."/>
            <person name="Ding X."/>
            <person name="Li L."/>
            <person name="Jiang X."/>
            <person name="Wang X."/>
            <person name="Tian R."/>
            <person name="Su H."/>
            <person name="Shen Z."/>
            <person name="Chen S."/>
            <person name="Liu T."/>
            <person name="Gong W."/>
            <person name="Liu W."/>
            <person name="Sun Q."/>
        </authorList>
    </citation>
    <scope>FUNCTION</scope>
</reference>
<reference key="71">
    <citation type="journal article" date="2020" name="Cell Discov.">
        <title>Phosphorylation of cGAS by CDK1 impairs self-DNA sensing in mitosis.</title>
        <authorList>
            <person name="Zhong L."/>
            <person name="Hu M.M."/>
            <person name="Bian L.J."/>
            <person name="Liu Y."/>
            <person name="Chen Q."/>
            <person name="Shu H.B."/>
        </authorList>
    </citation>
    <scope>FUNCTION AS CGAS KINASE</scope>
</reference>
<reference key="72">
    <citation type="journal article" date="2020" name="J. Virol.">
        <title>The Severe Fever with Thrombocytopenia Syndrome Virus NSs Protein Interacts with CDK1 To Induce G2 Cell Cycle Arrest and Positively Regulate Viral Replication.</title>
        <authorList>
            <person name="Liu S."/>
            <person name="Liu H."/>
            <person name="Kang J."/>
            <person name="Xu L."/>
            <person name="Zhang K."/>
            <person name="Li X."/>
            <person name="Hou W."/>
            <person name="Wang Z."/>
            <person name="Wang T."/>
        </authorList>
    </citation>
    <scope>INTERACTION WITH SFTSV VIRUS NSS (MICROBIAL INFECTION)</scope>
</reference>
<reference key="73">
    <citation type="journal article" date="2020" name="Mol. Biol. Cell">
        <title>Multisite phosphorylation determines the formation of Ska-Ndc80 macro-complexes that are essential for chromosome segregation during mitosis.</title>
        <authorList>
            <person name="Zhang Q."/>
            <person name="Hu L."/>
            <person name="Chen Y."/>
            <person name="Tian W."/>
            <person name="Liu H."/>
        </authorList>
    </citation>
    <scope>FUNCTION</scope>
</reference>
<reference key="74">
    <citation type="journal article" date="2022" name="Cancer Sci.">
        <title>CDK1/FBXW7 facilitates degradation and ubiquitination of MLST8 to inhibit progression of renal cell carcinoma.</title>
        <authorList>
            <person name="Zhang E."/>
            <person name="Chen S."/>
            <person name="Tang H."/>
            <person name="Fei C."/>
            <person name="Yuan Z."/>
            <person name="Mu X."/>
            <person name="Qin Y."/>
            <person name="Liu H."/>
            <person name="Fan Y."/>
            <person name="Tan M."/>
            <person name="Wang X."/>
        </authorList>
    </citation>
    <scope>FUNCTION</scope>
</reference>
<reference key="75">
    <citation type="journal article" date="2023" name="Mol. Cell">
        <title>ATR promotes clearance of damaged DNA and damaged cells by rupturing micronuclei.</title>
        <authorList>
            <person name="Joo Y.K."/>
            <person name="Black E.M."/>
            <person name="Trier I."/>
            <person name="Haakma W."/>
            <person name="Zou L."/>
            <person name="Kabeche L."/>
        </authorList>
    </citation>
    <scope>FUNCTION</scope>
</reference>
<protein>
    <recommendedName>
        <fullName>Cyclin-dependent kinase 1</fullName>
        <shortName>CDK1</shortName>
        <ecNumber evidence="27 28 29 35 41">2.7.11.22</ecNumber>
        <ecNumber evidence="1">2.7.11.23</ecNumber>
    </recommendedName>
    <alternativeName>
        <fullName>Cell division control protein 2 homolog</fullName>
    </alternativeName>
    <alternativeName>
        <fullName>Cell division protein kinase 1</fullName>
    </alternativeName>
    <alternativeName>
        <fullName>p34 protein kinase</fullName>
    </alternativeName>
</protein>